<evidence type="ECO:0000250" key="1"/>
<evidence type="ECO:0000250" key="2">
    <source>
        <dbReference type="UniProtKB" id="Q9QXX0"/>
    </source>
</evidence>
<evidence type="ECO:0000255" key="3"/>
<evidence type="ECO:0000255" key="4">
    <source>
        <dbReference type="PROSITE-ProRule" id="PRU00076"/>
    </source>
</evidence>
<evidence type="ECO:0000255" key="5">
    <source>
        <dbReference type="PROSITE-ProRule" id="PRU00377"/>
    </source>
</evidence>
<evidence type="ECO:0000256" key="6">
    <source>
        <dbReference type="SAM" id="MobiDB-lite"/>
    </source>
</evidence>
<evidence type="ECO:0000269" key="7">
    <source>
    </source>
</evidence>
<evidence type="ECO:0000269" key="8">
    <source>
    </source>
</evidence>
<evidence type="ECO:0000269" key="9">
    <source>
    </source>
</evidence>
<evidence type="ECO:0000269" key="10">
    <source>
    </source>
</evidence>
<evidence type="ECO:0000269" key="11">
    <source>
    </source>
</evidence>
<evidence type="ECO:0000269" key="12">
    <source>
    </source>
</evidence>
<evidence type="ECO:0000269" key="13">
    <source>
    </source>
</evidence>
<evidence type="ECO:0000269" key="14">
    <source>
    </source>
</evidence>
<evidence type="ECO:0000269" key="15">
    <source>
    </source>
</evidence>
<evidence type="ECO:0000269" key="16">
    <source>
    </source>
</evidence>
<evidence type="ECO:0000269" key="17">
    <source>
    </source>
</evidence>
<evidence type="ECO:0000269" key="18">
    <source>
    </source>
</evidence>
<evidence type="ECO:0000269" key="19">
    <source>
    </source>
</evidence>
<evidence type="ECO:0000269" key="20">
    <source>
    </source>
</evidence>
<evidence type="ECO:0000269" key="21">
    <source>
    </source>
</evidence>
<evidence type="ECO:0000269" key="22">
    <source>
    </source>
</evidence>
<evidence type="ECO:0000269" key="23">
    <source>
    </source>
</evidence>
<evidence type="ECO:0000269" key="24">
    <source>
    </source>
</evidence>
<evidence type="ECO:0000269" key="25">
    <source>
    </source>
</evidence>
<evidence type="ECO:0000269" key="26">
    <source>
    </source>
</evidence>
<evidence type="ECO:0000269" key="27">
    <source>
    </source>
</evidence>
<evidence type="ECO:0000269" key="28">
    <source>
    </source>
</evidence>
<evidence type="ECO:0000269" key="29">
    <source>
    </source>
</evidence>
<evidence type="ECO:0000269" key="30">
    <source>
    </source>
</evidence>
<evidence type="ECO:0000303" key="31">
    <source>
    </source>
</evidence>
<evidence type="ECO:0000305" key="32"/>
<evidence type="ECO:0007829" key="33">
    <source>
        <dbReference type="PDB" id="2KB9"/>
    </source>
</evidence>
<evidence type="ECO:0007829" key="34">
    <source>
        <dbReference type="PDB" id="4CC0"/>
    </source>
</evidence>
<proteinExistence type="evidence at protein level"/>
<keyword id="KW-0002">3D-structure</keyword>
<keyword id="KW-0025">Alternative splicing</keyword>
<keyword id="KW-0106">Calcium</keyword>
<keyword id="KW-1003">Cell membrane</keyword>
<keyword id="KW-0144">Charcot-Marie-Tooth disease</keyword>
<keyword id="KW-0209">Deafness</keyword>
<keyword id="KW-0217">Developmental protein</keyword>
<keyword id="KW-0225">Disease variant</keyword>
<keyword id="KW-1015">Disulfide bond</keyword>
<keyword id="KW-0245">EGF-like domain</keyword>
<keyword id="KW-0325">Glycoprotein</keyword>
<keyword id="KW-0472">Membrane</keyword>
<keyword id="KW-0523">Neurodegeneration</keyword>
<keyword id="KW-0622">Neuropathy</keyword>
<keyword id="KW-0914">Notch signaling pathway</keyword>
<keyword id="KW-1267">Proteomics identification</keyword>
<keyword id="KW-1185">Reference proteome</keyword>
<keyword id="KW-0677">Repeat</keyword>
<keyword id="KW-0732">Signal</keyword>
<keyword id="KW-0812">Transmembrane</keyword>
<keyword id="KW-1133">Transmembrane helix</keyword>
<comment type="function">
    <text evidence="1 22 25 29">Ligand for multiple Notch receptors and involved in the mediation of Notch signaling (PubMed:18660822, PubMed:20437614). May be involved in cell-fate decisions during hematopoiesis (PubMed:9462510). Seems to be involved in early and late stages of mammalian cardiovascular development. Inhibits myoblast differentiation (By similarity). Enhances fibroblast growth factor-induced angiogenesis (in vitro).</text>
</comment>
<comment type="subunit">
    <text evidence="2 22">Interacts with NOTCH2 and NOTCH3 (By similarity). Interacts with NOTCH1 (in the presence of calcium ions) (PubMed:18660822).</text>
</comment>
<comment type="interaction">
    <interactant intactId="EBI-2847071">
        <id>P78504</id>
    </interactant>
    <interactant intactId="EBI-2623451">
        <id>P15529</id>
        <label>CD46</label>
    </interactant>
    <organismsDiffer>false</organismsDiffer>
    <experiments>5</experiments>
</comment>
<comment type="interaction">
    <interactant intactId="EBI-2847071">
        <id>P78504</id>
    </interactant>
    <interactant intactId="EBI-636374">
        <id>P46531</id>
        <label>NOTCH1</label>
    </interactant>
    <organismsDiffer>false</organismsDiffer>
    <experiments>6</experiments>
</comment>
<comment type="subcellular location">
    <subcellularLocation>
        <location>Membrane</location>
        <topology>Single-pass type I membrane protein</topology>
    </subcellularLocation>
    <subcellularLocation>
        <location evidence="27">Cell membrane</location>
    </subcellularLocation>
</comment>
<comment type="alternative products">
    <event type="alternative splicing"/>
    <isoform>
        <id>P78504-1</id>
        <name>1</name>
        <sequence type="displayed"/>
    </isoform>
    <isoform>
        <id>P78504-2</id>
        <name>2</name>
        <sequence type="described" ref="VSP_056532"/>
    </isoform>
</comment>
<comment type="tissue specificity">
    <text>Widely expressed in adult and fetal tissues. In cervix epithelium expressed in undifferentiated subcolumnar reserve cells and squamous metaplasia. Expression is up-regulated in cervical squamous cell carcinoma. Expressed in bone marrow cell line HS-27a which supports the long-term maintenance of immature progenitor cells.</text>
</comment>
<comment type="developmental stage">
    <text evidence="9">Expressed in 32-52 days embryos in the distal cardiac outflow tract and pulmonary artery, major arteries, portal vein, optic vesicle, otocyst, branchial arches, metanephros, pancreas, mesocardium, around the major bronchial branches, and in the neural tube.</text>
</comment>
<comment type="domain">
    <text evidence="22 23">The second EGF-like domain is atypical.</text>
</comment>
<comment type="disease" evidence="7 8 10 11 13 14 17 18 20 21 25 26 27 28 30">
    <disease id="DI-00071">
        <name>Alagille syndrome 1</name>
        <acronym>ALGS1</acronym>
        <description>A form of Alagille syndrome, an autosomal dominant multisystem disorder. It is clinically defined by hepatic bile duct paucity and cholestasis in association with cardiac, skeletal, and ophthalmologic manifestations. There are characteristic facial features and less frequent clinical involvement of the renal and vascular systems.</description>
        <dbReference type="MIM" id="118450"/>
    </disease>
    <text>The disease is caused by variants affecting the gene represented in this entry.</text>
</comment>
<comment type="disease" evidence="12 24 25">
    <disease id="DI-02362">
        <name>Tetralogy of Fallot</name>
        <acronym>TOF</acronym>
        <description>A congenital heart anomaly which consists of pulmonary stenosis, ventricular septal defect, dextroposition of the aorta (aorta is on the right side instead of the left) and hypertrophy of the right ventricle. In this condition, blood from both ventricles (oxygen-rich and oxygen-poor) is pumped into the body often causing cyanosis.</description>
        <dbReference type="MIM" id="187500"/>
    </disease>
    <text>The disease is caused by variants affecting the gene represented in this entry.</text>
</comment>
<comment type="disease" evidence="15 25">
    <disease id="DI-05252">
        <name>Deafness, congenital heart defects, and posterior embryotoxon</name>
        <acronym>DCHE</acronym>
        <description>An autosomal dominant disease characterized by mild to severe combined hearing loss, congenital heart defects, and posterior embryotoxon, a corneal abnormality consisting of a central collagen core surrounded by a thin layer of Descemets membrane and separated from the anterior chamber by a layer of endothelium. Congenital heart defects include tetralogy of Fallot, ventricular septal defect, or isolated peripheral pulmonic stenosis.</description>
        <dbReference type="MIM" id="617992"/>
    </disease>
    <text>The disease is caused by variants affecting the gene represented in this entry.</text>
</comment>
<comment type="disease" evidence="27">
    <disease id="DI-06245">
        <name>Charcot-Marie-Tooth disease, axonal, type 2HH</name>
        <acronym>CMT2HH</acronym>
        <description>An autosomal dominant, axonal form of Charcot-Marie-Tooth disease, a disorder of the peripheral nervous system characterized by progressive weakness and atrophy, initially of the peroneal muscles and later of the distal muscles of the arms. Charcot-Marie-Tooth disease is classified in two main groups on the basis of electrophysiologic properties and histopathology: primary peripheral demyelinating neuropathies (designated CMT1 when they are dominantly inherited) and primary peripheral axonal neuropathies (CMT2). Neuropathies of the CMT2 group are characterized by signs of axonal degeneration in the absence of obvious myelin alterations, normal or slightly reduced nerve conduction velocities, and progressive distal muscle weakness and atrophy. CMT2HH is characterized by vocal fold paresis that remains throughout life and may be severe. Additional features include pes cavus, scoliosis, distal sensory impairment with hyporeflexia, mild distal muscle weakness and atrophy primarily affecting the lower limbs, although the upper limbs may also be involved.</description>
        <dbReference type="MIM" id="619574"/>
    </disease>
    <text>The disease is caused by variants affecting the gene represented in this entry.</text>
</comment>
<comment type="sequence caution" evidence="32">
    <conflict type="frameshift">
        <sequence resource="EMBL-CDS" id="AAC51323"/>
    </conflict>
</comment>
<comment type="online information" name="Atlas of Genetics and Cytogenetics in Oncology and Haematology">
    <link uri="https://atlasgeneticsoncology.org/gene/41029/JAG1"/>
</comment>
<sequence length="1218" mass="133799">MRSPRTRGRSGRPLSLLLALLCALRAKVCGASGQFELEILSMQNVNGELQNGNCCGGARNPGDRKCTRDECDTYFKVCLKEYQSRVTAGGPCSFGSGSTPVIGGNTFNLKASRGNDRNRIVLPFSFAWPRSYTLLVEAWDSSNDTVQPDSIIEKASHSGMINPSRQWQTLKQNTGVAHFEYQIRVTCDDYYYGFGCNKFCRPRDDFFGHYACDQNGNKTCMEGWMGPECNRAICRQGCSPKHGSCKLPGDCRCQYGWQGLYCDKCIPHPGCVHGICNEPWQCLCETNWGGQLCDKDLNYCGTHQPCLNGGTCSNTGPDKYQCSCPEGYSGPNCEIAEHACLSDPCHNRGSCKETSLGFECECSPGWTGPTCSTNIDDCSPNNCSHGGTCQDLVNGFKCVCPPQWTGKTCQLDANECEAKPCVNAKSCKNLIASYYCDCLPGWMGQNCDININDCLGQCQNDASCRDLVNGYRCICPPGYAGDHCERDIDECASNPCLNGGHCQNEINRFQCLCPTGFSGNLCQLDIDYCEPNPCQNGAQCYNRASDYFCKCPEDYEGKNCSHLKDHCRTTPCEVIDSCTVAMASNDTPEGVRYISSNVCGPHGKCKSQSGGKFTCDCNKGFTGTYCHENINDCESNPCRNGGTCIDGVNSYKCICSDGWEGAYCETNINDCSQNPCHNGGTCRDLVNDFYCDCKNGWKGKTCHSRDSQCDEATCNNGGTCYDEGDAFKCMCPGGWEGTTCNIARNSSCLPNPCHNGGTCVVNGESFTCVCKEGWEGPICAQNTNDCSPHPCYNSGTCVDGDNWYRCECAPGFAGPDCRININECQSSPCAFGATCVDEINGYRCVCPPGHSGAKCQEVSGRPCITMGSVIPDGAKWDDDCNTCQCLNGRIACSKVWCGPRPCLLHKGHSECPSGQSCIPILDDQCFVHPCTGVGECRSSSLQPVKTKCTSDSYYQDNCANITFTFNKEMMSPGLTTEHICSELRNLNILKNVSAEYSIYIACEPSPSANNEIHVAISAEDIRDDGNPIKEITDKIIDLVSKRDGNSSLIAAVAEVRVQRRPLKNRTDFLVPLLSSVLTVAWICCLVTAFYWCLRKRRKPGSHTHSASEDNTTNNVREQLNQIKNPIEKHGANTVPIKDYENKNSKMSKIRTHNSEVEEDDMDKHQQKARFAKQPAYTLVDREEKPPNGTPTKHPNWTNKQDNRDLESAQSLNRMEYIV</sequence>
<feature type="signal peptide" evidence="3">
    <location>
        <begin position="1"/>
        <end position="33"/>
    </location>
</feature>
<feature type="chain" id="PRO_0000007625" description="Protein jagged-1">
    <location>
        <begin position="34"/>
        <end position="1218"/>
    </location>
</feature>
<feature type="topological domain" description="Extracellular" evidence="3">
    <location>
        <begin position="34"/>
        <end position="1067"/>
    </location>
</feature>
<feature type="transmembrane region" description="Helical" evidence="3">
    <location>
        <begin position="1068"/>
        <end position="1093"/>
    </location>
</feature>
<feature type="topological domain" description="Cytoplasmic" evidence="3">
    <location>
        <begin position="1094"/>
        <end position="1218"/>
    </location>
</feature>
<feature type="domain" description="DSL" evidence="5">
    <location>
        <begin position="185"/>
        <end position="229"/>
    </location>
</feature>
<feature type="domain" description="EGF-like 1" evidence="4">
    <location>
        <begin position="230"/>
        <end position="263"/>
    </location>
</feature>
<feature type="domain" description="EGF-like 2; atypical" evidence="4">
    <location>
        <begin position="264"/>
        <end position="294"/>
    </location>
</feature>
<feature type="domain" description="EGF-like 3" evidence="4">
    <location>
        <begin position="296"/>
        <end position="334"/>
    </location>
</feature>
<feature type="domain" description="EGF-like 4" evidence="4">
    <location>
        <begin position="336"/>
        <end position="372"/>
    </location>
</feature>
<feature type="domain" description="EGF-like 5; calcium-binding" evidence="4">
    <location>
        <begin position="374"/>
        <end position="410"/>
    </location>
</feature>
<feature type="domain" description="EGF-like 6; calcium-binding" evidence="4">
    <location>
        <begin position="412"/>
        <end position="448"/>
    </location>
</feature>
<feature type="domain" description="EGF-like 7; calcium-binding" evidence="4">
    <location>
        <begin position="450"/>
        <end position="485"/>
    </location>
</feature>
<feature type="domain" description="EGF-like 8; calcium-binding" evidence="4">
    <location>
        <begin position="487"/>
        <end position="523"/>
    </location>
</feature>
<feature type="domain" description="EGF-like 9" evidence="4">
    <location>
        <begin position="525"/>
        <end position="561"/>
    </location>
</feature>
<feature type="domain" description="EGF-like 10" evidence="4">
    <location>
        <begin position="586"/>
        <end position="627"/>
    </location>
</feature>
<feature type="domain" description="EGF-like 11; calcium-binding" evidence="4">
    <location>
        <begin position="629"/>
        <end position="665"/>
    </location>
</feature>
<feature type="domain" description="EGF-like 12; calcium-binding" evidence="4">
    <location>
        <begin position="667"/>
        <end position="703"/>
    </location>
</feature>
<feature type="domain" description="EGF-like 13" evidence="4">
    <location>
        <begin position="705"/>
        <end position="741"/>
    </location>
</feature>
<feature type="domain" description="EGF-like 14" evidence="4">
    <location>
        <begin position="744"/>
        <end position="780"/>
    </location>
</feature>
<feature type="domain" description="EGF-like 15; calcium-binding" evidence="4">
    <location>
        <begin position="782"/>
        <end position="818"/>
    </location>
</feature>
<feature type="domain" description="EGF-like 16; calcium-binding" evidence="4">
    <location>
        <begin position="820"/>
        <end position="856"/>
    </location>
</feature>
<feature type="region of interest" description="Important for interaction with NOTCH1" evidence="22">
    <location>
        <begin position="199"/>
        <end position="207"/>
    </location>
</feature>
<feature type="region of interest" description="Disordered" evidence="6">
    <location>
        <begin position="1152"/>
        <end position="1218"/>
    </location>
</feature>
<feature type="compositionally biased region" description="Polar residues" evidence="6">
    <location>
        <begin position="1189"/>
        <end position="1199"/>
    </location>
</feature>
<feature type="glycosylation site" description="N-linked (GlcNAc...) asparagine" evidence="3">
    <location>
        <position position="143"/>
    </location>
</feature>
<feature type="glycosylation site" description="N-linked (GlcNAc...) asparagine" evidence="3">
    <location>
        <position position="217"/>
    </location>
</feature>
<feature type="glycosylation site" description="N-linked (GlcNAc...) asparagine" evidence="3">
    <location>
        <position position="382"/>
    </location>
</feature>
<feature type="glycosylation site" description="N-linked (GlcNAc...) asparagine" evidence="3">
    <location>
        <position position="559"/>
    </location>
</feature>
<feature type="glycosylation site" description="N-linked (GlcNAc...) asparagine" evidence="3">
    <location>
        <position position="745"/>
    </location>
</feature>
<feature type="glycosylation site" description="N-linked (GlcNAc...) asparagine" evidence="3">
    <location>
        <position position="960"/>
    </location>
</feature>
<feature type="glycosylation site" description="N-linked (GlcNAc...) asparagine" evidence="3">
    <location>
        <position position="991"/>
    </location>
</feature>
<feature type="glycosylation site" description="N-linked (GlcNAc...) asparagine" evidence="3">
    <location>
        <position position="1045"/>
    </location>
</feature>
<feature type="glycosylation site" description="N-linked (GlcNAc...) asparagine" evidence="3">
    <location>
        <position position="1064"/>
    </location>
</feature>
<feature type="disulfide bond">
    <location>
        <begin position="187"/>
        <end position="196"/>
    </location>
</feature>
<feature type="disulfide bond">
    <location>
        <begin position="200"/>
        <end position="212"/>
    </location>
</feature>
<feature type="disulfide bond">
    <location>
        <begin position="220"/>
        <end position="229"/>
    </location>
</feature>
<feature type="disulfide bond">
    <location>
        <begin position="234"/>
        <end position="245"/>
    </location>
</feature>
<feature type="disulfide bond">
    <location>
        <begin position="238"/>
        <end position="251"/>
    </location>
</feature>
<feature type="disulfide bond">
    <location>
        <begin position="253"/>
        <end position="262"/>
    </location>
</feature>
<feature type="disulfide bond">
    <location>
        <begin position="265"/>
        <end position="276"/>
    </location>
</feature>
<feature type="disulfide bond">
    <location>
        <begin position="271"/>
        <end position="282"/>
    </location>
</feature>
<feature type="disulfide bond">
    <location>
        <begin position="284"/>
        <end position="293"/>
    </location>
</feature>
<feature type="disulfide bond">
    <location>
        <begin position="300"/>
        <end position="312"/>
    </location>
</feature>
<feature type="disulfide bond">
    <location>
        <begin position="306"/>
        <end position="322"/>
    </location>
</feature>
<feature type="disulfide bond">
    <location>
        <begin position="324"/>
        <end position="333"/>
    </location>
</feature>
<feature type="disulfide bond" evidence="1">
    <location>
        <begin position="340"/>
        <end position="351"/>
    </location>
</feature>
<feature type="disulfide bond" evidence="1">
    <location>
        <begin position="345"/>
        <end position="360"/>
    </location>
</feature>
<feature type="disulfide bond" evidence="1">
    <location>
        <begin position="362"/>
        <end position="371"/>
    </location>
</feature>
<feature type="disulfide bond" evidence="1">
    <location>
        <begin position="378"/>
        <end position="389"/>
    </location>
</feature>
<feature type="disulfide bond" evidence="1">
    <location>
        <begin position="383"/>
        <end position="398"/>
    </location>
</feature>
<feature type="disulfide bond" evidence="1">
    <location>
        <begin position="400"/>
        <end position="409"/>
    </location>
</feature>
<feature type="disulfide bond" evidence="1">
    <location>
        <begin position="416"/>
        <end position="427"/>
    </location>
</feature>
<feature type="disulfide bond" evidence="1">
    <location>
        <begin position="421"/>
        <end position="436"/>
    </location>
</feature>
<feature type="disulfide bond" evidence="1">
    <location>
        <begin position="438"/>
        <end position="447"/>
    </location>
</feature>
<feature type="disulfide bond" evidence="1">
    <location>
        <begin position="454"/>
        <end position="464"/>
    </location>
</feature>
<feature type="disulfide bond" evidence="1">
    <location>
        <begin position="458"/>
        <end position="473"/>
    </location>
</feature>
<feature type="disulfide bond" evidence="1">
    <location>
        <begin position="475"/>
        <end position="484"/>
    </location>
</feature>
<feature type="disulfide bond" evidence="1">
    <location>
        <begin position="491"/>
        <end position="502"/>
    </location>
</feature>
<feature type="disulfide bond" evidence="1">
    <location>
        <begin position="496"/>
        <end position="511"/>
    </location>
</feature>
<feature type="disulfide bond" evidence="1">
    <location>
        <begin position="513"/>
        <end position="522"/>
    </location>
</feature>
<feature type="disulfide bond" evidence="1">
    <location>
        <begin position="529"/>
        <end position="540"/>
    </location>
</feature>
<feature type="disulfide bond" evidence="1">
    <location>
        <begin position="534"/>
        <end position="549"/>
    </location>
</feature>
<feature type="disulfide bond" evidence="1">
    <location>
        <begin position="551"/>
        <end position="560"/>
    </location>
</feature>
<feature type="disulfide bond" evidence="1">
    <location>
        <begin position="578"/>
        <end position="605"/>
    </location>
</feature>
<feature type="disulfide bond" evidence="1">
    <location>
        <begin position="599"/>
        <end position="615"/>
    </location>
</feature>
<feature type="disulfide bond" evidence="1">
    <location>
        <begin position="617"/>
        <end position="626"/>
    </location>
</feature>
<feature type="disulfide bond" evidence="1">
    <location>
        <begin position="633"/>
        <end position="644"/>
    </location>
</feature>
<feature type="disulfide bond" evidence="1">
    <location>
        <begin position="638"/>
        <end position="653"/>
    </location>
</feature>
<feature type="disulfide bond" evidence="1">
    <location>
        <begin position="655"/>
        <end position="664"/>
    </location>
</feature>
<feature type="disulfide bond" evidence="1">
    <location>
        <begin position="671"/>
        <end position="682"/>
    </location>
</feature>
<feature type="disulfide bond" evidence="1">
    <location>
        <begin position="676"/>
        <end position="691"/>
    </location>
</feature>
<feature type="disulfide bond" evidence="1">
    <location>
        <begin position="693"/>
        <end position="702"/>
    </location>
</feature>
<feature type="disulfide bond" evidence="1">
    <location>
        <begin position="709"/>
        <end position="720"/>
    </location>
</feature>
<feature type="disulfide bond" evidence="1">
    <location>
        <begin position="714"/>
        <end position="729"/>
    </location>
</feature>
<feature type="disulfide bond" evidence="1">
    <location>
        <begin position="731"/>
        <end position="740"/>
    </location>
</feature>
<feature type="disulfide bond" evidence="1">
    <location>
        <begin position="748"/>
        <end position="759"/>
    </location>
</feature>
<feature type="disulfide bond" evidence="1">
    <location>
        <begin position="753"/>
        <end position="768"/>
    </location>
</feature>
<feature type="disulfide bond" evidence="1">
    <location>
        <begin position="770"/>
        <end position="779"/>
    </location>
</feature>
<feature type="disulfide bond" evidence="1">
    <location>
        <begin position="786"/>
        <end position="797"/>
    </location>
</feature>
<feature type="disulfide bond" evidence="1">
    <location>
        <begin position="791"/>
        <end position="806"/>
    </location>
</feature>
<feature type="disulfide bond" evidence="1">
    <location>
        <begin position="808"/>
        <end position="817"/>
    </location>
</feature>
<feature type="disulfide bond" evidence="1">
    <location>
        <begin position="824"/>
        <end position="835"/>
    </location>
</feature>
<feature type="disulfide bond" evidence="1">
    <location>
        <begin position="829"/>
        <end position="844"/>
    </location>
</feature>
<feature type="disulfide bond" evidence="1">
    <location>
        <begin position="846"/>
        <end position="855"/>
    </location>
</feature>
<feature type="splice variant" id="VSP_056532" description="In isoform 2." evidence="31">
    <location>
        <begin position="1"/>
        <end position="159"/>
    </location>
</feature>
<feature type="sequence variant" id="VAR_026296" description="In ALGS1." evidence="21">
    <location>
        <begin position="22"/>
        <end position="25"/>
    </location>
</feature>
<feature type="sequence variant" id="VAR_026297" description="In ALGS1." evidence="18">
    <original>A</original>
    <variation>V</variation>
    <location>
        <position position="31"/>
    </location>
</feature>
<feature type="sequence variant" id="VAR_026298" description="In ALGS1." evidence="14">
    <original>G</original>
    <variation>D</variation>
    <location>
        <position position="33"/>
    </location>
</feature>
<feature type="sequence variant" id="VAR_026299" description="In ALGS1; dbSNP:rs876661123." evidence="21">
    <original>G</original>
    <variation>S</variation>
    <location>
        <position position="33"/>
    </location>
</feature>
<feature type="sequence variant" id="VAR_026300" description="In ALGS1; dbSNP:rs2122644925." evidence="21">
    <original>G</original>
    <variation>V</variation>
    <location>
        <position position="33"/>
    </location>
</feature>
<feature type="sequence variant" id="VAR_013186" description="In ALGS1; the mutant is unable to activate Notch signaling; dbSNP:rs121918352." evidence="13 14 25">
    <original>L</original>
    <variation>S</variation>
    <location>
        <position position="37"/>
    </location>
</feature>
<feature type="sequence variant" id="VAR_026301" description="In ALGS1." evidence="17">
    <original>I</original>
    <variation>S</variation>
    <location>
        <position position="39"/>
    </location>
</feature>
<feature type="sequence variant" id="VAR_026302" description="In ALGS1." evidence="18">
    <original>L</original>
    <variation>P</variation>
    <location>
        <position position="40"/>
    </location>
</feature>
<feature type="sequence variant" id="VAR_026303" description="In biliary atresia; extrahepatic; dbSNP:rs183974372." evidence="16">
    <original>V</original>
    <variation>L</variation>
    <location>
        <position position="45"/>
    </location>
</feature>
<feature type="sequence variant" id="VAR_026304" description="In biliary atresia; extrahepatic." evidence="16">
    <original>N</original>
    <variation>D</variation>
    <location>
        <position position="53"/>
    </location>
</feature>
<feature type="sequence variant" id="VAR_026305" description="In biliary atresia; extrahepatic." evidence="16">
    <original>K</original>
    <variation>M</variation>
    <location>
        <position position="65"/>
    </location>
</feature>
<feature type="sequence variant" id="VAR_026306" description="In ALGS1; dbSNP:rs2122644646." evidence="18">
    <original>F</original>
    <variation>S</variation>
    <location>
        <position position="75"/>
    </location>
</feature>
<feature type="sequence variant" id="VAR_026307" description="In ALGS1; dbSNP:rs1555830957." evidence="14">
    <original>C</original>
    <variation>S</variation>
    <location>
        <position position="78"/>
    </location>
</feature>
<feature type="sequence variant" id="VAR_013187" description="In ALGS1." evidence="7">
    <original>L</original>
    <variation>H</variation>
    <location>
        <position position="79"/>
    </location>
</feature>
<feature type="sequence variant" id="VAR_026308" description="In ALGS1." evidence="21">
    <original>C</original>
    <variation>R</variation>
    <location>
        <position position="92"/>
    </location>
</feature>
<feature type="sequence variant" id="VAR_026309" description="In ALGS1." evidence="21">
    <original>C</original>
    <variation>Y</variation>
    <location>
        <position position="92"/>
    </location>
</feature>
<feature type="sequence variant" id="VAR_026310" description="In ALGS1." evidence="20">
    <original>I</original>
    <variation>N</variation>
    <location>
        <position position="120"/>
    </location>
</feature>
<feature type="sequence variant" id="VAR_026311" description="In ALGS1; dbSNP:rs1282498658." evidence="18">
    <original>P</original>
    <variation>S</variation>
    <location>
        <position position="123"/>
    </location>
</feature>
<feature type="sequence variant" id="VAR_013188" description="In ALGS1; dbSNP:rs930247415." evidence="7">
    <original>A</original>
    <variation>T</variation>
    <location>
        <position position="127"/>
    </location>
</feature>
<feature type="sequence variant" id="VAR_013189" description="In ALGS1; dbSNP:rs1032920906." evidence="7">
    <original>P</original>
    <variation>R</variation>
    <location>
        <position position="129"/>
    </location>
</feature>
<feature type="sequence variant" id="VAR_048985" description="In dbSNP:rs6040067.">
    <original>V</original>
    <variation>I</variation>
    <location>
        <position position="146"/>
    </location>
</feature>
<feature type="sequence variant" id="VAR_013190" description="In ALGS1." evidence="8">
    <original>I</original>
    <variation>T</variation>
    <location>
        <position position="152"/>
    </location>
</feature>
<feature type="sequence variant" id="VAR_026312" description="In ALGS1." evidence="21">
    <original>A</original>
    <variation>P</variation>
    <location>
        <position position="155"/>
    </location>
</feature>
<feature type="sequence variant" id="VAR_013191" description="In ALGS1." evidence="7">
    <original>P</original>
    <variation>L</variation>
    <location>
        <position position="163"/>
    </location>
</feature>
<feature type="sequence variant" id="VAR_026313" description="In ALGS1; dbSNP:rs1555829676." evidence="18">
    <original>P</original>
    <variation>R</variation>
    <location>
        <position position="163"/>
    </location>
</feature>
<feature type="sequence variant" id="VAR_026314" description="In ALGS1." evidence="14">
    <original>Y</original>
    <variation>N</variation>
    <location>
        <position position="181"/>
    </location>
</feature>
<feature type="sequence variant" id="VAR_013192" description="In ALGS1; dbSNP:rs121918350." evidence="28 30">
    <original>R</original>
    <variation>C</variation>
    <location>
        <position position="184"/>
    </location>
</feature>
<feature type="sequence variant" id="VAR_013193" description="In ALGS1." evidence="7">
    <original>R</original>
    <variation>G</variation>
    <location>
        <position position="184"/>
    </location>
</feature>
<feature type="sequence variant" id="VAR_013194" description="In ALGS1; loss of expression at the cell membrane; dbSNP:rs121918351." evidence="17 27 30">
    <original>R</original>
    <variation>H</variation>
    <location>
        <position position="184"/>
    </location>
</feature>
<feature type="sequence variant" id="VAR_013195" description="In ALGS1." evidence="8">
    <original>R</original>
    <variation>L</variation>
    <location>
        <position position="184"/>
    </location>
</feature>
<feature type="sequence variant" id="VAR_013196" description="In ALGS1." evidence="7">
    <original>C</original>
    <variation>S</variation>
    <location>
        <position position="187"/>
    </location>
</feature>
<feature type="sequence variant" id="VAR_026315" description="In ALGS1." evidence="20">
    <original>C</original>
    <variation>Y</variation>
    <location>
        <position position="187"/>
    </location>
</feature>
<feature type="sequence variant" id="VAR_026316" description="In biliary atresia; extrahepatic." evidence="16">
    <original>R</original>
    <variation>K</variation>
    <location>
        <position position="203"/>
    </location>
</feature>
<feature type="sequence variant" id="VAR_013197" description="In ALGS1." evidence="11">
    <original>C</original>
    <variation>F</variation>
    <location>
        <position position="220"/>
    </location>
</feature>
<feature type="sequence variant" id="VAR_026317" description="In ALGS1." evidence="18">
    <original>W</original>
    <variation>C</variation>
    <location>
        <position position="224"/>
    </location>
</feature>
<feature type="sequence variant" id="VAR_013198" description="In ALGS1." evidence="7">
    <original>C</original>
    <variation>G</variation>
    <location>
        <position position="229"/>
    </location>
</feature>
<feature type="sequence variant" id="VAR_013199" description="In ALGS1." evidence="10">
    <original>C</original>
    <variation>Y</variation>
    <location>
        <position position="229"/>
    </location>
</feature>
<feature type="sequence variant" id="VAR_026318" description="In DCHE; the mutant is unable to activate Notch signaling; dbSNP:rs121918353." evidence="15 25">
    <original>C</original>
    <variation>Y</variation>
    <location>
        <position position="234"/>
    </location>
</feature>
<feature type="sequence variant" id="VAR_026319" description="In ALGS1." evidence="21">
    <original>R</original>
    <variation>G</variation>
    <location>
        <position position="252"/>
    </location>
</feature>
<feature type="sequence variant" id="VAR_026320" description="In ALGS1." evidence="21">
    <original>G</original>
    <variation>S</variation>
    <location>
        <position position="256"/>
    </location>
</feature>
<feature type="sequence variant" id="VAR_026321" description="In ALGS1; dbSNP:rs797044956." evidence="18">
    <original>P</original>
    <variation>L</variation>
    <location>
        <position position="269"/>
    </location>
</feature>
<feature type="sequence variant" id="VAR_026322" description="In ALGS1." evidence="21">
    <original>C</original>
    <variation>R</variation>
    <location>
        <position position="271"/>
    </location>
</feature>
<feature type="sequence variant" id="VAR_013200" description="In TOF; temperature sensitive mutation; the protein is abnormally glycosylated and retained intracellularly; unable to activate Notch signaling; dbSNP:rs28939668." evidence="12 19 25">
    <original>G</original>
    <variation>D</variation>
    <location>
        <position position="274"/>
    </location>
</feature>
<feature type="sequence variant" id="VAR_013201" description="In ALGS1; dbSNP:rs1555829067." evidence="7">
    <original>C</original>
    <variation>F</variation>
    <location>
        <position position="284"/>
    </location>
</feature>
<feature type="sequence variant" id="VAR_013202" description="In ALGS1." evidence="7">
    <original>W</original>
    <variation>C</variation>
    <location>
        <position position="288"/>
    </location>
</feature>
<feature type="sequence variant" id="VAR_013203" description="In ALGS1; dbSNP:rs863223650." evidence="10">
    <original>G</original>
    <variation>R</variation>
    <location>
        <position position="386"/>
    </location>
</feature>
<feature type="sequence variant" id="VAR_071513" description="In ALGS1." evidence="26">
    <original>C</original>
    <variation>W</variation>
    <location>
        <position position="436"/>
    </location>
</feature>
<feature type="sequence variant" id="VAR_013204" description="In ALGS1." evidence="7">
    <original>C</original>
    <variation>F</variation>
    <location>
        <position position="438"/>
    </location>
</feature>
<feature type="sequence variant" id="VAR_026323" description="In ALGS1; dbSNP:rs527236046." evidence="21">
    <original>N</original>
    <variation>S</variation>
    <location>
        <position position="504"/>
    </location>
</feature>
<feature type="sequence variant" id="VAR_086413" description="In CMT2HH; decreased glycosylation; decreased expression at the cell membrane due to partial retention in the endoplasmic reticulum; dbSNP:rs2122606362." evidence="27">
    <original>S</original>
    <variation>R</variation>
    <location>
        <position position="577"/>
    </location>
</feature>
<feature type="sequence variant" id="VAR_086414" description="In CMT2HH; decreased glycosylation; decreased expression at the cell membrane due to partial retention in the endoplasmic reticulum; dbSNP:rs2122604480." evidence="27">
    <original>S</original>
    <variation>P</variation>
    <location>
        <position position="650"/>
    </location>
</feature>
<feature type="sequence variant" id="VAR_080875" description="Found in a patient with pulmonary stenosis; uncertain significance; the mutant is able to activate Notch signaling." evidence="25">
    <original>C</original>
    <variation>S</variation>
    <location>
        <position position="664"/>
    </location>
</feature>
<feature type="sequence variant" id="VAR_026324" description="In biliary atresia; extrahepatic." evidence="16">
    <original>Y</original>
    <variation>D</variation>
    <location>
        <position position="690"/>
    </location>
</feature>
<feature type="sequence variant" id="VAR_026325" description="In ALGS1; dbSNP:rs566563238." evidence="21">
    <original>C</original>
    <variation>Y</variation>
    <location>
        <position position="693"/>
    </location>
</feature>
<feature type="sequence variant" id="VAR_026326" description="In ALGS1; dbSNP:rs2067300040." evidence="14">
    <original>C</original>
    <variation>Y</variation>
    <location>
        <position position="714"/>
    </location>
</feature>
<feature type="sequence variant" id="VAR_013205" description="In ALGS1." evidence="7">
    <original>C</original>
    <variation>S</variation>
    <location>
        <position position="731"/>
    </location>
</feature>
<feature type="sequence variant" id="VAR_013206" description="In ALGS1." evidence="7">
    <original>C</original>
    <variation>R</variation>
    <location>
        <position position="740"/>
    </location>
</feature>
<feature type="sequence variant" id="VAR_013207" description="In ALGS1." evidence="11">
    <original>C</original>
    <variation>R</variation>
    <location>
        <position position="753"/>
    </location>
</feature>
<feature type="sequence variant" id="VAR_080876" description="In TOF; the mutant is unable to activate Notch signaling; dbSNP:rs769531968." evidence="25">
    <original>P</original>
    <variation>L</variation>
    <location>
        <position position="810"/>
    </location>
</feature>
<feature type="sequence variant" id="VAR_026327" evidence="21">
    <original>R</original>
    <variation>K</variation>
    <location>
        <position position="818"/>
    </location>
</feature>
<feature type="sequence variant" id="VAR_026328" description="In biliary atresia; extrahepatic; dbSNP:rs35761929." evidence="16">
    <original>P</original>
    <variation>R</variation>
    <location>
        <position position="871"/>
    </location>
</feature>
<feature type="sequence variant" id="VAR_026329" description="In ALGS1; uncertain significance; dbSNP:rs149419694." evidence="21">
    <original>R</original>
    <variation>Q</variation>
    <location>
        <position position="889"/>
    </location>
</feature>
<feature type="sequence variant" id="VAR_026330" description="In ALGS1; dbSNP:rs876661122." evidence="14">
    <original>C</original>
    <variation>S</variation>
    <location>
        <position position="902"/>
    </location>
</feature>
<feature type="sequence variant" id="VAR_026331" description="In biliary atresia; extrahepatic." evidence="16">
    <original>H</original>
    <variation>Q</variation>
    <location>
        <position position="908"/>
    </location>
</feature>
<feature type="sequence variant" id="VAR_026332" description="In ALGS1; dbSNP:rs1555827782." evidence="21">
    <original>C</original>
    <variation>Y</variation>
    <location>
        <position position="911"/>
    </location>
</feature>
<feature type="sequence variant" id="VAR_026333" description="In ALGS1; dbSNP:rs766479402." evidence="17">
    <original>S</original>
    <variation>R</variation>
    <location>
        <position position="913"/>
    </location>
</feature>
<feature type="sequence variant" id="VAR_026334" description="In biliary atresia; extrahepatic; dbSNP:rs1305578649." evidence="16">
    <original>L</original>
    <variation>P</variation>
    <location>
        <position position="921"/>
    </location>
</feature>
<feature type="sequence variant" id="VAR_026335" description="In ALGS1; likely benign; the mutant is able to activate Notch signaling; dbSNP:rs145895196." evidence="18 25">
    <original>R</original>
    <variation>Q</variation>
    <location>
        <position position="937"/>
    </location>
</feature>
<feature type="sequence variant" id="VAR_026336" description="In ALGS1." evidence="21">
    <original>VR</original>
    <variation>G</variation>
    <location>
        <begin position="1055"/>
        <end position="1056"/>
    </location>
</feature>
<feature type="sequence variant" id="VAR_080877" description="Found in patient with tetralogy of Fallot and pulmonary stenosis; uncertain significance; dbSNP:rs1250645531." evidence="25">
    <original>H</original>
    <variation>Q</variation>
    <location>
        <position position="1104"/>
    </location>
</feature>
<feature type="sequence variant" id="VAR_026337" description="In biliary atresia; extrahepatic; dbSNP:rs138007561." evidence="16">
    <original>R</original>
    <variation>Q</variation>
    <location>
        <position position="1213"/>
    </location>
</feature>
<feature type="mutagenesis site" description="Strongly reduced NOTCH1 binding." evidence="22">
    <original>F</original>
    <variation>A</variation>
    <location>
        <position position="207"/>
    </location>
</feature>
<feature type="sequence conflict" description="In Ref. 5; AAB39007." evidence="32" ref="5">
    <original>R</original>
    <variation>P</variation>
    <location>
        <position position="117"/>
    </location>
</feature>
<feature type="sequence conflict" description="In Ref. 1; AAC51731." evidence="32" ref="1">
    <original>P</original>
    <variation>R</variation>
    <location>
        <position position="227"/>
    </location>
</feature>
<feature type="sequence conflict" description="In Ref. 1; AAC51731." evidence="32" ref="1">
    <original>N</original>
    <variation>D</variation>
    <location>
        <position position="498"/>
    </location>
</feature>
<feature type="strand" evidence="34">
    <location>
        <begin position="33"/>
        <end position="43"/>
    </location>
</feature>
<feature type="strand" evidence="34">
    <location>
        <begin position="52"/>
        <end position="57"/>
    </location>
</feature>
<feature type="turn" evidence="34">
    <location>
        <begin position="61"/>
        <end position="63"/>
    </location>
</feature>
<feature type="strand" evidence="34">
    <location>
        <begin position="73"/>
        <end position="81"/>
    </location>
</feature>
<feature type="strand" evidence="34">
    <location>
        <begin position="88"/>
        <end position="90"/>
    </location>
</feature>
<feature type="strand" evidence="34">
    <location>
        <begin position="95"/>
        <end position="98"/>
    </location>
</feature>
<feature type="strand" evidence="34">
    <location>
        <begin position="103"/>
        <end position="105"/>
    </location>
</feature>
<feature type="strand" evidence="34">
    <location>
        <begin position="118"/>
        <end position="124"/>
    </location>
</feature>
<feature type="strand" evidence="34">
    <location>
        <begin position="130"/>
        <end position="140"/>
    </location>
</feature>
<feature type="strand" evidence="34">
    <location>
        <begin position="143"/>
        <end position="147"/>
    </location>
</feature>
<feature type="strand" evidence="34">
    <location>
        <begin position="150"/>
        <end position="160"/>
    </location>
</feature>
<feature type="strand" evidence="34">
    <location>
        <begin position="163"/>
        <end position="172"/>
    </location>
</feature>
<feature type="strand" evidence="34">
    <location>
        <begin position="174"/>
        <end position="187"/>
    </location>
</feature>
<feature type="turn" evidence="34">
    <location>
        <begin position="193"/>
        <end position="196"/>
    </location>
</feature>
<feature type="strand" evidence="34">
    <location>
        <begin position="203"/>
        <end position="205"/>
    </location>
</feature>
<feature type="strand" evidence="34">
    <location>
        <begin position="208"/>
        <end position="212"/>
    </location>
</feature>
<feature type="strand" evidence="34">
    <location>
        <begin position="218"/>
        <end position="220"/>
    </location>
</feature>
<feature type="turn" evidence="34">
    <location>
        <begin position="226"/>
        <end position="229"/>
    </location>
</feature>
<feature type="turn" evidence="34">
    <location>
        <begin position="240"/>
        <end position="242"/>
    </location>
</feature>
<feature type="strand" evidence="34">
    <location>
        <begin position="257"/>
        <end position="259"/>
    </location>
</feature>
<feature type="turn" evidence="33">
    <location>
        <begin position="268"/>
        <end position="270"/>
    </location>
</feature>
<feature type="strand" evidence="34">
    <location>
        <begin position="273"/>
        <end position="275"/>
    </location>
</feature>
<feature type="strand" evidence="33">
    <location>
        <begin position="277"/>
        <end position="280"/>
    </location>
</feature>
<feature type="strand" evidence="33">
    <location>
        <begin position="286"/>
        <end position="289"/>
    </location>
</feature>
<feature type="turn" evidence="34">
    <location>
        <begin position="290"/>
        <end position="293"/>
    </location>
</feature>
<feature type="strand" evidence="34">
    <location>
        <begin position="295"/>
        <end position="297"/>
    </location>
</feature>
<feature type="helix" evidence="34">
    <location>
        <begin position="299"/>
        <end position="303"/>
    </location>
</feature>
<feature type="strand" evidence="34">
    <location>
        <begin position="311"/>
        <end position="316"/>
    </location>
</feature>
<feature type="strand" evidence="34">
    <location>
        <begin position="319"/>
        <end position="323"/>
    </location>
</feature>
<feature type="strand" evidence="34">
    <location>
        <begin position="328"/>
        <end position="330"/>
    </location>
</feature>
<reference key="1">
    <citation type="journal article" date="1997" name="Genomics">
        <title>Identification and cloning of the human homolog (JAG1) of the rat Jagged1 gene from the Alagille syndrome critical region at 20p12.</title>
        <authorList>
            <person name="Oda T."/>
            <person name="Elkahloun A.G."/>
            <person name="Meltzer P.S."/>
            <person name="Chandrasekharappa S.C."/>
        </authorList>
    </citation>
    <scope>NUCLEOTIDE SEQUENCE [MRNA] (ISOFORM 1)</scope>
</reference>
<reference key="2">
    <citation type="journal article" date="1997" name="Nat. Genet.">
        <title>Alagille syndrome is caused by mutations in human Jagged1, which encodes a ligand for Notch1.</title>
        <authorList>
            <person name="Li L."/>
            <person name="Krantz I.D."/>
            <person name="Deng Y."/>
            <person name="Genin A."/>
            <person name="Banta A.B."/>
            <person name="Collins C.C."/>
            <person name="Qi M."/>
            <person name="Trask B.J."/>
            <person name="Kuo W.L."/>
            <person name="Cochran J."/>
            <person name="Costa T."/>
            <person name="Pierpont M.E.M."/>
            <person name="Rand E.B."/>
            <person name="Piccoli D.A."/>
            <person name="Hood L."/>
            <person name="Spinner N.B."/>
        </authorList>
    </citation>
    <scope>NUCLEOTIDE SEQUENCE [MRNA] (ISOFORM 1)</scope>
    <scope>INVOLVEMENT IN ALGS1</scope>
    <scope>VARIANT ALGS1 CYS-184</scope>
    <source>
        <tissue>Bone marrow</tissue>
    </source>
</reference>
<reference key="3">
    <citation type="journal article" date="1998" name="Immunity">
        <title>The human homolog of rat Jagged1 expressed by marrow stroma inhibits differentiation of 32D cells through interaction with Notch1.</title>
        <authorList>
            <person name="Li L."/>
            <person name="Milner L.A."/>
            <person name="Deng Y."/>
            <person name="Iwata M."/>
            <person name="Banta A.B."/>
            <person name="Graf L."/>
            <person name="Marcovina S."/>
            <person name="Friedman C."/>
            <person name="Trask B.J."/>
            <person name="Hood L."/>
            <person name="Torok-Storb B."/>
        </authorList>
    </citation>
    <scope>NUCLEOTIDE SEQUENCE [MRNA] (ISOFORM 1)</scope>
    <scope>FUNCTION</scope>
</reference>
<reference key="4">
    <citation type="journal article" date="1999" name="EMBO J.">
        <title>Rel/NF-kappaB can trigger the Notch signaling pathway by inducing the expression of Jagged1, a ligand for Notch receptors.</title>
        <authorList>
            <person name="Bash J."/>
            <person name="Zong W.-X."/>
            <person name="Banga S."/>
            <person name="Rivera A."/>
            <person name="Ballard D.W."/>
            <person name="Ron Y."/>
            <person name="Gelinas C."/>
        </authorList>
    </citation>
    <scope>NUCLEOTIDE SEQUENCE [MRNA] (ISOFORM 1)</scope>
    <source>
        <tissue>Cervix carcinoma</tissue>
    </source>
</reference>
<reference key="5">
    <citation type="journal article" date="1999" name="Am. J. Pathol.">
        <title>Human ligands of the Notch receptor.</title>
        <authorList>
            <person name="Gray G.E."/>
            <person name="Mann R.S."/>
            <person name="Mitsiadis E."/>
            <person name="Henrique D."/>
            <person name="Carcangiu M.-L."/>
            <person name="Banks A."/>
            <person name="Leiman J."/>
            <person name="Ward D."/>
            <person name="Ish-Horowitz D."/>
            <person name="Artavanis-Tsakonas S."/>
        </authorList>
    </citation>
    <scope>NUCLEOTIDE SEQUENCE [MRNA] (ISOFORM 1)</scope>
</reference>
<reference key="6">
    <citation type="journal article" date="2004" name="Nat. Genet.">
        <title>Complete sequencing and characterization of 21,243 full-length human cDNAs.</title>
        <authorList>
            <person name="Ota T."/>
            <person name="Suzuki Y."/>
            <person name="Nishikawa T."/>
            <person name="Otsuki T."/>
            <person name="Sugiyama T."/>
            <person name="Irie R."/>
            <person name="Wakamatsu A."/>
            <person name="Hayashi K."/>
            <person name="Sato H."/>
            <person name="Nagai K."/>
            <person name="Kimura K."/>
            <person name="Makita H."/>
            <person name="Sekine M."/>
            <person name="Obayashi M."/>
            <person name="Nishi T."/>
            <person name="Shibahara T."/>
            <person name="Tanaka T."/>
            <person name="Ishii S."/>
            <person name="Yamamoto J."/>
            <person name="Saito K."/>
            <person name="Kawai Y."/>
            <person name="Isono Y."/>
            <person name="Nakamura Y."/>
            <person name="Nagahari K."/>
            <person name="Murakami K."/>
            <person name="Yasuda T."/>
            <person name="Iwayanagi T."/>
            <person name="Wagatsuma M."/>
            <person name="Shiratori A."/>
            <person name="Sudo H."/>
            <person name="Hosoiri T."/>
            <person name="Kaku Y."/>
            <person name="Kodaira H."/>
            <person name="Kondo H."/>
            <person name="Sugawara M."/>
            <person name="Takahashi M."/>
            <person name="Kanda K."/>
            <person name="Yokoi T."/>
            <person name="Furuya T."/>
            <person name="Kikkawa E."/>
            <person name="Omura Y."/>
            <person name="Abe K."/>
            <person name="Kamihara K."/>
            <person name="Katsuta N."/>
            <person name="Sato K."/>
            <person name="Tanikawa M."/>
            <person name="Yamazaki M."/>
            <person name="Ninomiya K."/>
            <person name="Ishibashi T."/>
            <person name="Yamashita H."/>
            <person name="Murakawa K."/>
            <person name="Fujimori K."/>
            <person name="Tanai H."/>
            <person name="Kimata M."/>
            <person name="Watanabe M."/>
            <person name="Hiraoka S."/>
            <person name="Chiba Y."/>
            <person name="Ishida S."/>
            <person name="Ono Y."/>
            <person name="Takiguchi S."/>
            <person name="Watanabe S."/>
            <person name="Yosida M."/>
            <person name="Hotuta T."/>
            <person name="Kusano J."/>
            <person name="Kanehori K."/>
            <person name="Takahashi-Fujii A."/>
            <person name="Hara H."/>
            <person name="Tanase T.-O."/>
            <person name="Nomura Y."/>
            <person name="Togiya S."/>
            <person name="Komai F."/>
            <person name="Hara R."/>
            <person name="Takeuchi K."/>
            <person name="Arita M."/>
            <person name="Imose N."/>
            <person name="Musashino K."/>
            <person name="Yuuki H."/>
            <person name="Oshima A."/>
            <person name="Sasaki N."/>
            <person name="Aotsuka S."/>
            <person name="Yoshikawa Y."/>
            <person name="Matsunawa H."/>
            <person name="Ichihara T."/>
            <person name="Shiohata N."/>
            <person name="Sano S."/>
            <person name="Moriya S."/>
            <person name="Momiyama H."/>
            <person name="Satoh N."/>
            <person name="Takami S."/>
            <person name="Terashima Y."/>
            <person name="Suzuki O."/>
            <person name="Nakagawa S."/>
            <person name="Senoh A."/>
            <person name="Mizoguchi H."/>
            <person name="Goto Y."/>
            <person name="Shimizu F."/>
            <person name="Wakebe H."/>
            <person name="Hishigaki H."/>
            <person name="Watanabe T."/>
            <person name="Sugiyama A."/>
            <person name="Takemoto M."/>
            <person name="Kawakami B."/>
            <person name="Yamazaki M."/>
            <person name="Watanabe K."/>
            <person name="Kumagai A."/>
            <person name="Itakura S."/>
            <person name="Fukuzumi Y."/>
            <person name="Fujimori Y."/>
            <person name="Komiyama M."/>
            <person name="Tashiro H."/>
            <person name="Tanigami A."/>
            <person name="Fujiwara T."/>
            <person name="Ono T."/>
            <person name="Yamada K."/>
            <person name="Fujii Y."/>
            <person name="Ozaki K."/>
            <person name="Hirao M."/>
            <person name="Ohmori Y."/>
            <person name="Kawabata A."/>
            <person name="Hikiji T."/>
            <person name="Kobatake N."/>
            <person name="Inagaki H."/>
            <person name="Ikema Y."/>
            <person name="Okamoto S."/>
            <person name="Okitani R."/>
            <person name="Kawakami T."/>
            <person name="Noguchi S."/>
            <person name="Itoh T."/>
            <person name="Shigeta K."/>
            <person name="Senba T."/>
            <person name="Matsumura K."/>
            <person name="Nakajima Y."/>
            <person name="Mizuno T."/>
            <person name="Morinaga M."/>
            <person name="Sasaki M."/>
            <person name="Togashi T."/>
            <person name="Oyama M."/>
            <person name="Hata H."/>
            <person name="Watanabe M."/>
            <person name="Komatsu T."/>
            <person name="Mizushima-Sugano J."/>
            <person name="Satoh T."/>
            <person name="Shirai Y."/>
            <person name="Takahashi Y."/>
            <person name="Nakagawa K."/>
            <person name="Okumura K."/>
            <person name="Nagase T."/>
            <person name="Nomura N."/>
            <person name="Kikuchi H."/>
            <person name="Masuho Y."/>
            <person name="Yamashita R."/>
            <person name="Nakai K."/>
            <person name="Yada T."/>
            <person name="Nakamura Y."/>
            <person name="Ohara O."/>
            <person name="Isogai T."/>
            <person name="Sugano S."/>
        </authorList>
    </citation>
    <scope>NUCLEOTIDE SEQUENCE [LARGE SCALE MRNA] (ISOFORM 2)</scope>
    <source>
        <tissue>Testis</tissue>
    </source>
</reference>
<reference key="7">
    <citation type="journal article" date="2001" name="Nature">
        <title>The DNA sequence and comparative analysis of human chromosome 20.</title>
        <authorList>
            <person name="Deloukas P."/>
            <person name="Matthews L.H."/>
            <person name="Ashurst J.L."/>
            <person name="Burton J."/>
            <person name="Gilbert J.G.R."/>
            <person name="Jones M."/>
            <person name="Stavrides G."/>
            <person name="Almeida J.P."/>
            <person name="Babbage A.K."/>
            <person name="Bagguley C.L."/>
            <person name="Bailey J."/>
            <person name="Barlow K.F."/>
            <person name="Bates K.N."/>
            <person name="Beard L.M."/>
            <person name="Beare D.M."/>
            <person name="Beasley O.P."/>
            <person name="Bird C.P."/>
            <person name="Blakey S.E."/>
            <person name="Bridgeman A.M."/>
            <person name="Brown A.J."/>
            <person name="Buck D."/>
            <person name="Burrill W.D."/>
            <person name="Butler A.P."/>
            <person name="Carder C."/>
            <person name="Carter N.P."/>
            <person name="Chapman J.C."/>
            <person name="Clamp M."/>
            <person name="Clark G."/>
            <person name="Clark L.N."/>
            <person name="Clark S.Y."/>
            <person name="Clee C.M."/>
            <person name="Clegg S."/>
            <person name="Cobley V.E."/>
            <person name="Collier R.E."/>
            <person name="Connor R.E."/>
            <person name="Corby N.R."/>
            <person name="Coulson A."/>
            <person name="Coville G.J."/>
            <person name="Deadman R."/>
            <person name="Dhami P.D."/>
            <person name="Dunn M."/>
            <person name="Ellington A.G."/>
            <person name="Frankland J.A."/>
            <person name="Fraser A."/>
            <person name="French L."/>
            <person name="Garner P."/>
            <person name="Grafham D.V."/>
            <person name="Griffiths C."/>
            <person name="Griffiths M.N.D."/>
            <person name="Gwilliam R."/>
            <person name="Hall R.E."/>
            <person name="Hammond S."/>
            <person name="Harley J.L."/>
            <person name="Heath P.D."/>
            <person name="Ho S."/>
            <person name="Holden J.L."/>
            <person name="Howden P.J."/>
            <person name="Huckle E."/>
            <person name="Hunt A.R."/>
            <person name="Hunt S.E."/>
            <person name="Jekosch K."/>
            <person name="Johnson C.M."/>
            <person name="Johnson D."/>
            <person name="Kay M.P."/>
            <person name="Kimberley A.M."/>
            <person name="King A."/>
            <person name="Knights A."/>
            <person name="Laird G.K."/>
            <person name="Lawlor S."/>
            <person name="Lehvaeslaiho M.H."/>
            <person name="Leversha M.A."/>
            <person name="Lloyd C."/>
            <person name="Lloyd D.M."/>
            <person name="Lovell J.D."/>
            <person name="Marsh V.L."/>
            <person name="Martin S.L."/>
            <person name="McConnachie L.J."/>
            <person name="McLay K."/>
            <person name="McMurray A.A."/>
            <person name="Milne S.A."/>
            <person name="Mistry D."/>
            <person name="Moore M.J.F."/>
            <person name="Mullikin J.C."/>
            <person name="Nickerson T."/>
            <person name="Oliver K."/>
            <person name="Parker A."/>
            <person name="Patel R."/>
            <person name="Pearce T.A.V."/>
            <person name="Peck A.I."/>
            <person name="Phillimore B.J.C.T."/>
            <person name="Prathalingam S.R."/>
            <person name="Plumb R.W."/>
            <person name="Ramsay H."/>
            <person name="Rice C.M."/>
            <person name="Ross M.T."/>
            <person name="Scott C.E."/>
            <person name="Sehra H.K."/>
            <person name="Shownkeen R."/>
            <person name="Sims S."/>
            <person name="Skuce C.D."/>
            <person name="Smith M.L."/>
            <person name="Soderlund C."/>
            <person name="Steward C.A."/>
            <person name="Sulston J.E."/>
            <person name="Swann R.M."/>
            <person name="Sycamore N."/>
            <person name="Taylor R."/>
            <person name="Tee L."/>
            <person name="Thomas D.W."/>
            <person name="Thorpe A."/>
            <person name="Tracey A."/>
            <person name="Tromans A.C."/>
            <person name="Vaudin M."/>
            <person name="Wall M."/>
            <person name="Wallis J.M."/>
            <person name="Whitehead S.L."/>
            <person name="Whittaker P."/>
            <person name="Willey D.L."/>
            <person name="Williams L."/>
            <person name="Williams S.A."/>
            <person name="Wilming L."/>
            <person name="Wray P.W."/>
            <person name="Hubbard T."/>
            <person name="Durbin R.M."/>
            <person name="Bentley D.R."/>
            <person name="Beck S."/>
            <person name="Rogers J."/>
        </authorList>
    </citation>
    <scope>NUCLEOTIDE SEQUENCE [LARGE SCALE GENOMIC DNA]</scope>
</reference>
<reference key="8">
    <citation type="journal article" date="2004" name="Genome Res.">
        <title>The status, quality, and expansion of the NIH full-length cDNA project: the Mammalian Gene Collection (MGC).</title>
        <authorList>
            <consortium name="The MGC Project Team"/>
        </authorList>
    </citation>
    <scope>NUCLEOTIDE SEQUENCE [LARGE SCALE MRNA] (ISOFORM 1)</scope>
    <source>
        <tissue>Brain</tissue>
    </source>
</reference>
<reference key="9">
    <citation type="journal article" date="1996" name="J. Biol. Chem.">
        <title>An antisense oligonucleotide to the notch ligand Jagged enhances fibroblast growth factor-induced angiogenesis in vitro.</title>
        <authorList>
            <person name="Zimrin A.B."/>
            <person name="Pepper M.S."/>
            <person name="McMahon G.A."/>
            <person name="Nguyen F."/>
            <person name="Montesano R."/>
            <person name="Maciag T."/>
        </authorList>
    </citation>
    <scope>NUCLEOTIDE SEQUENCE [MRNA] OF 14-1218 (ISOFORM 1)</scope>
    <source>
        <tissue>Umbilical vein endothelial cell</tissue>
    </source>
</reference>
<reference key="10">
    <citation type="journal article" date="1997" name="Nat. Genet.">
        <title>Mutations in the human Jagged1 gene are responsible for Alagille syndrome.</title>
        <authorList>
            <person name="Oda T."/>
            <person name="Elkahloun A.G."/>
            <person name="Pike B.L."/>
            <person name="Okajima K."/>
            <person name="Krantz I.D."/>
            <person name="Genin A."/>
            <person name="Piccoli D.A."/>
            <person name="Meltzer P.S."/>
            <person name="Spinner N.B."/>
            <person name="Collins F.S."/>
            <person name="Chandrasekharappa S.C."/>
        </authorList>
    </citation>
    <scope>DISEASE</scope>
</reference>
<reference key="11">
    <citation type="journal article" date="2000" name="J. Med. Genet.">
        <title>JAGGED1 expression in human embryos: correlation with the Alagille syndrome phenotype.</title>
        <authorList>
            <person name="Jones E.A."/>
            <person name="Clement-Jones M."/>
            <person name="Wilson D.I."/>
        </authorList>
    </citation>
    <scope>DEVELOPMENTAL STAGE</scope>
</reference>
<reference key="12">
    <citation type="journal article" date="2010" name="J. Med. Genet.">
        <title>Comprehensive genotype-phenotype analysis in 230 patients with tetralogy of Fallot.</title>
        <authorList>
            <person name="Rauch R."/>
            <person name="Hofbeck M."/>
            <person name="Zweier C."/>
            <person name="Koch A."/>
            <person name="Zink S."/>
            <person name="Trautmann U."/>
            <person name="Hoyer J."/>
            <person name="Kaulitz R."/>
            <person name="Singer H."/>
            <person name="Rauch A."/>
        </authorList>
    </citation>
    <scope>INVOLVEMENT IN TOF</scope>
</reference>
<reference key="13">
    <citation type="journal article" date="2011" name="BMC Syst. Biol.">
        <title>Initial characterization of the human central proteome.</title>
        <authorList>
            <person name="Burkard T.R."/>
            <person name="Planyavsky M."/>
            <person name="Kaupe I."/>
            <person name="Breitwieser F.P."/>
            <person name="Buerckstuemmer T."/>
            <person name="Bennett K.L."/>
            <person name="Superti-Furga G."/>
            <person name="Colinge J."/>
        </authorList>
    </citation>
    <scope>IDENTIFICATION BY MASS SPECTROMETRY [LARGE SCALE ANALYSIS]</scope>
</reference>
<reference key="14">
    <citation type="journal article" date="2008" name="Nat. Struct. Mol. Biol.">
        <title>A conserved face of the Jagged/Serrate DSL domain is involved in Notch trans-activation and cis-inhibition.</title>
        <authorList>
            <person name="Cordle J."/>
            <person name="Johnson S."/>
            <person name="Tay J.Z."/>
            <person name="Roversi P."/>
            <person name="Wilkin M.B."/>
            <person name="de Madrid B.H."/>
            <person name="Shimizu H."/>
            <person name="Jensen S."/>
            <person name="Whiteman P."/>
            <person name="Jin B."/>
            <person name="Redfield C."/>
            <person name="Baron M."/>
            <person name="Lea S.M."/>
            <person name="Handford P.A."/>
        </authorList>
    </citation>
    <scope>X-RAY CRYSTALLOGRAPHY (2.5 ANGSTROMS) OF 185-335</scope>
    <scope>FUNCTION</scope>
    <scope>INTERACTION WITH NOTCH1</scope>
    <scope>DOMAIN</scope>
    <scope>MUTAGENESIS OF PHE-207</scope>
    <scope>DISULFIDE BONDS</scope>
</reference>
<reference key="15">
    <citation type="journal article" date="2009" name="BMC Struct. Biol.">
        <title>Exon 6 of human JAG1 encodes a conserved structural unit.</title>
        <authorList>
            <person name="Pintar A."/>
            <person name="Guarnaccia C."/>
            <person name="Dhir S."/>
            <person name="Pongor S."/>
        </authorList>
    </citation>
    <scope>STRUCTURE BY NMR OF 252-295</scope>
    <scope>DOMAIN</scope>
    <scope>DISULFIDE BONDS</scope>
</reference>
<reference key="16">
    <citation type="journal article" date="1998" name="Am. J. Hum. Genet.">
        <title>Spectrum and frequency of Jagged1 (JAG1) mutations in Alagille syndrome patients and their families.</title>
        <authorList>
            <person name="Krantz I.D."/>
            <person name="Colliton R.P."/>
            <person name="Genin A."/>
            <person name="Rand E.B."/>
            <person name="Li L."/>
            <person name="Piccoli D.A."/>
            <person name="Spinner N.B."/>
        </authorList>
    </citation>
    <scope>VARIANTS ALGS1 CYS-184 AND HIS-184</scope>
</reference>
<reference key="17">
    <citation type="journal article" date="1999" name="Gastroenterology">
        <title>Mutations in JAGGED1 gene are predominantly sporadic in Alagille syndrome.</title>
        <authorList>
            <person name="Crosnier C."/>
            <person name="Driancourt C."/>
            <person name="Raynaud N."/>
            <person name="Dhorne-Pollet S."/>
            <person name="Pollet N."/>
            <person name="Bernard O."/>
            <person name="Hadchouel M."/>
            <person name="Meunier-Rotival M."/>
        </authorList>
    </citation>
    <scope>VARIANTS ALGS1 HIS-79; THR-127; ARG-129; LEU-163; GLY-184; SER-187; GLY-229; PHE-284; CYS-288; PHE-438; SER-731 AND ARG-740</scope>
</reference>
<reference key="18">
    <citation type="journal article" date="1999" name="Hum. Mutat.">
        <title>Jagged-1 mutation analysis in Italian Alagille syndrome patients.</title>
        <authorList>
            <person name="Pilia G."/>
            <person name="Uda M."/>
            <person name="Macis D."/>
            <person name="Frau F."/>
            <person name="Crisponi L."/>
            <person name="Balli F."/>
            <person name="Barbera C."/>
            <person name="Colombo C."/>
            <person name="Frediani T."/>
            <person name="Gatti R."/>
            <person name="Iorio R."/>
            <person name="Marazzi M.G."/>
            <person name="Marcellini M."/>
            <person name="Musumeci S."/>
            <person name="Nebbia G."/>
            <person name="Vajro P."/>
            <person name="Ruffa G."/>
            <person name="Zancan L."/>
            <person name="Cao A."/>
            <person name="DeVirgilis S."/>
        </authorList>
    </citation>
    <scope>VARIANTS ALGS1 THR-152 AND LEU-184</scope>
</reference>
<reference key="19">
    <citation type="journal article" date="2000" name="Hum. Mutat.">
        <title>Jagged1 (JAG1) mutation detection in an Australian Alagille syndrome population.</title>
        <authorList>
            <person name="Heritage M.L."/>
            <person name="MacMillan J.C."/>
            <person name="Colliton R.P."/>
            <person name="Genin A."/>
            <person name="Spinner N.B."/>
            <person name="Anderson G.J."/>
        </authorList>
    </citation>
    <scope>VARIANTS ALGS1 TYR-229 AND ARG-386</scope>
</reference>
<reference key="20">
    <citation type="journal article" date="2001" name="Hum. Mol. Genet.">
        <title>Familial tetralogy of Fallot caused by mutation in the Jagged1 gene.</title>
        <authorList>
            <person name="Eldadah Z.A."/>
            <person name="Hamosh A."/>
            <person name="Biery N.J."/>
            <person name="Montgomery R.A."/>
            <person name="Duke M."/>
            <person name="Elkins R."/>
            <person name="Dietz H.C."/>
        </authorList>
    </citation>
    <scope>VARIANT TOF ASP-274</scope>
</reference>
<reference key="21">
    <citation type="journal article" date="2001" name="Hum. Mol. Genet.">
        <title>Defective intracellular transport and processing of JAG1 missense mutations in Alagille syndrome.</title>
        <authorList>
            <person name="Morrissette J.J.D."/>
            <person name="Colliton R.P."/>
            <person name="Spinner N.B."/>
        </authorList>
    </citation>
    <scope>VARIANT ALGS1 SER-37</scope>
</reference>
<reference key="22">
    <citation type="journal article" date="2001" name="Hum. Mutat.">
        <title>Fifteen novel mutations in the JAGGED1 gene of patients with Alagille syndrome.</title>
        <authorList>
            <person name="Crosnier C."/>
            <person name="Driancourt C."/>
            <person name="Raynaud N."/>
            <person name="Hadchouel M."/>
            <person name="Meunier-Rotival M."/>
        </authorList>
    </citation>
    <scope>VARIANTS ALGS1 PHE-220 AND ARG-753</scope>
</reference>
<reference key="23">
    <citation type="journal article" date="2001" name="Hum. Mutat.">
        <title>Mutation analysis of Jagged1 (JAG1) in Alagille syndrome patients.</title>
        <authorList>
            <person name="Colliton R.P."/>
            <person name="Bason L."/>
            <person name="Lu F.-M."/>
            <person name="Piccoli D.A."/>
            <person name="Krantz I.D."/>
            <person name="Spinner N.B."/>
        </authorList>
    </citation>
    <scope>VARIANTS ALGS1 ASP-33; SER-37; SER-78; ASN-181; TYR-714 AND SER-902</scope>
</reference>
<reference key="24">
    <citation type="journal article" date="2002" name="Am. J. Hum. Genet.">
        <title>Familial deafness, congenital heart defects, and posterior embryotoxon caused by cysteine substitution in the first epidermal-growth-factor-like domain of Jagged 1.</title>
        <authorList>
            <person name="Le Caignec C."/>
            <person name="Lefevre M."/>
            <person name="Schott J.J."/>
            <person name="Chaventre A."/>
            <person name="Gayet M."/>
            <person name="Calais C."/>
            <person name="Moisan J.P."/>
        </authorList>
    </citation>
    <scope>INVOLVEMENT IN DCHE</scope>
    <scope>VARIANT DCHE TYR-234</scope>
</reference>
<reference key="25">
    <citation type="journal article" date="2002" name="Hepatology">
        <title>The significance of human Jagged 1 mutations detected in severe cases of extrahepatic biliary atresia.</title>
        <authorList>
            <person name="Kohsaka T."/>
            <person name="Yuan Z.-R."/>
            <person name="Guo S.-X."/>
            <person name="Tagawa M."/>
            <person name="Nakamura A."/>
            <person name="Nakano M."/>
            <person name="Kawasasaki H."/>
            <person name="Inomata Y."/>
            <person name="Tanaka K."/>
            <person name="Miyauchi J."/>
        </authorList>
    </citation>
    <scope>VARIANTS BILIARY ATRESIA LEU-45; ASP-53; MET-65; LYS-203; ASP-690; ARG-871; GLN-908; PRO-921 AND GLN-1213</scope>
</reference>
<reference key="26">
    <citation type="journal article" date="2002" name="Hum. Mutat.">
        <title>DHPLC mutation analysis of Jagged1 (JAG1) reveals six novel mutations in Australian Alagille syndrome patients.</title>
        <authorList>
            <person name="Heritage M.L."/>
            <person name="MacMillan J.C."/>
            <person name="Anderson G.J."/>
        </authorList>
    </citation>
    <scope>VARIANTS ALGS1 SER-39; HIS-184 AND ARG-913</scope>
</reference>
<reference key="27">
    <citation type="journal article" date="2003" name="Am. J. Hum. Genet.">
        <title>Conditional JAG1 mutation shows the developing heart is more sensitive than developing liver to JAG1 dosage.</title>
        <authorList>
            <person name="Lu F."/>
            <person name="Morrissette J.J.D."/>
            <person name="Spinner N.B."/>
        </authorList>
    </citation>
    <scope>CHARACTERIZATION OF VARIANT ASP-274</scope>
</reference>
<reference key="28">
    <citation type="journal article" date="2003" name="Hum. Mutat.">
        <title>Identification of 36 novel Jagged1 (JAG1) mutations in patients with Alagille syndrome.</title>
        <authorList>
            <person name="Roepke A."/>
            <person name="Kujat A."/>
            <person name="Graeber M."/>
            <person name="Giannakudis J."/>
            <person name="Hansmann I."/>
        </authorList>
    </citation>
    <scope>VARIANTS ALGS1 VAL-31; PRO-40; SER-75; SER-123; ARG-163; CYS-224 AND LEU-269</scope>
    <scope>VARIANT GLN-937</scope>
</reference>
<reference key="29">
    <citation type="journal article" date="2005" name="Hum. Mutat.">
        <title>Twelve novel JAG1 gene mutations in Polish Alagille syndrome patients.</title>
        <authorList>
            <person name="Jurkiewicz D."/>
            <person name="Popowska E."/>
            <person name="Glaeser C."/>
            <person name="Hansmann I."/>
            <person name="Krajewska-Walasek M."/>
        </authorList>
    </citation>
    <scope>VARIANTS ALGS1 ASN-120 AND TYR-187</scope>
</reference>
<reference key="30">
    <citation type="journal article" date="2006" name="Hum. Mutat.">
        <title>Jagged1 (JAG1) mutations in Alagille syndrome: increasing the mutation detection rate.</title>
        <authorList>
            <person name="Warthen D.M."/>
            <person name="Moore E.C."/>
            <person name="Kamath B.M."/>
            <person name="Morrissette J.J.D."/>
            <person name="Sanchez P."/>
            <person name="Piccoli D.A."/>
            <person name="Krantz I.D."/>
            <person name="Spinner N.B."/>
        </authorList>
    </citation>
    <scope>VARIANTS ALGS1 22-CYS--ARG-25 DEL; SER-33; VAL-33; ARG-92; TYR-92; PRO-155; GLY-252; SER-256; ARG-271; SER-504; TYR-693; GLN-889; TYR-911 AND 1055-VAL-ARG-1056 DELINS GLY</scope>
    <scope>VARIANT LYS-818</scope>
</reference>
<reference key="31">
    <citation type="journal article" date="2013" name="Mol. Syndromol.">
        <title>Alagille Syndrome: A new missense mutation detected by whole-exome sequencing in a case previously found to be negative by DHPLC and MLPA.</title>
        <authorList>
            <person name="Vozzi D."/>
            <person name="Licastro D."/>
            <person name="Martelossi S."/>
            <person name="Athanasakis E."/>
            <person name="Gasparini P."/>
            <person name="Fabretto A."/>
        </authorList>
    </citation>
    <scope>VARIANT ALGS1 TRP-436</scope>
</reference>
<reference key="32">
    <citation type="journal article" date="2010" name="Hum. Mutat.">
        <title>Jagged1 (JAG1) mutations in patients with tetralogy of Fallot or pulmonic stenosis.</title>
        <authorList>
            <person name="Bauer R.C."/>
            <person name="Laney A.O."/>
            <person name="Smith R."/>
            <person name="Gerfen J."/>
            <person name="Morrissette J.J."/>
            <person name="Woyciechowski S."/>
            <person name="Garbarini J."/>
            <person name="Loomes K.M."/>
            <person name="Krantz I.D."/>
            <person name="Urban Z."/>
            <person name="Gelb B.D."/>
            <person name="Goldmuntz E."/>
            <person name="Spinner N.B."/>
        </authorList>
    </citation>
    <scope>VARIANTS SER-664 AND GLN-1104</scope>
    <scope>CHARACTERIZATION OF VARIANT SER-664</scope>
    <scope>VARIANT TOF LEU-810</scope>
    <scope>CHARACTERIZATION OF VARIANTS TOF ASP-274 AND LEU-810</scope>
    <scope>CHARACTERIZATION OF VARIANTS ALGS1 SER-37 AND GLN-937</scope>
    <scope>CHARACTERIZATION OF VARIANT DCHE TYR-234</scope>
    <scope>FUNCTION</scope>
</reference>
<reference key="33">
    <citation type="journal article" date="2020" name="J. Clin. Invest.">
        <title>Dominant mutations of the Notch ligand Jagged1 cause peripheral neuropathy.</title>
        <authorList>
            <person name="Sullivan J.M."/>
            <person name="Motley W.W."/>
            <person name="Johnson J.O."/>
            <person name="Aisenberg W.H."/>
            <person name="Marshall K.L."/>
            <person name="Barwick K.E."/>
            <person name="Kong L."/>
            <person name="Huh J.S."/>
            <person name="Saavedra-Rivera P.C."/>
            <person name="McEntagart M.M."/>
            <person name="Marion M.H."/>
            <person name="Hicklin L.A."/>
            <person name="Modarres H."/>
            <person name="Baple E.L."/>
            <person name="Farah M.H."/>
            <person name="Zuberi A.R."/>
            <person name="Lutz C.M."/>
            <person name="Gaudet R."/>
            <person name="Traynor B.J."/>
            <person name="Crosby A.H."/>
            <person name="Sumner C.J."/>
        </authorList>
    </citation>
    <scope>VARIANTS CMT2HH ARG-577 AND PRO-650</scope>
    <scope>INVOLVEMENT IN CMT2HH</scope>
    <scope>SUBCELLULAR LOCATION</scope>
    <scope>CHARACTERIZATION OF VARIANT ALGS1 HIS-184</scope>
    <scope>CHARACTERIZATION OF VARIANTS CMT2HH ARG-577 AND PRO-650</scope>
</reference>
<name>JAG1_HUMAN</name>
<dbReference type="EMBL" id="AF003837">
    <property type="protein sequence ID" value="AAC51731.1"/>
    <property type="molecule type" value="mRNA"/>
</dbReference>
<dbReference type="EMBL" id="U73936">
    <property type="protein sequence ID" value="AAC52020.1"/>
    <property type="molecule type" value="mRNA"/>
</dbReference>
<dbReference type="EMBL" id="AF028593">
    <property type="protein sequence ID" value="AAB84053.1"/>
    <property type="molecule type" value="mRNA"/>
</dbReference>
<dbReference type="EMBL" id="U61276">
    <property type="protein sequence ID" value="AAB39007.1"/>
    <property type="molecule type" value="mRNA"/>
</dbReference>
<dbReference type="EMBL" id="AK302554">
    <property type="protein sequence ID" value="BAG63823.1"/>
    <property type="molecule type" value="mRNA"/>
</dbReference>
<dbReference type="EMBL" id="AL035456">
    <property type="status" value="NOT_ANNOTATED_CDS"/>
    <property type="molecule type" value="Genomic_DNA"/>
</dbReference>
<dbReference type="EMBL" id="BC126205">
    <property type="protein sequence ID" value="AAI26206.1"/>
    <property type="molecule type" value="mRNA"/>
</dbReference>
<dbReference type="EMBL" id="BC126207">
    <property type="protein sequence ID" value="AAI26208.1"/>
    <property type="molecule type" value="mRNA"/>
</dbReference>
<dbReference type="EMBL" id="U77720">
    <property type="protein sequence ID" value="AAC51323.1"/>
    <property type="status" value="ALT_FRAME"/>
    <property type="molecule type" value="mRNA"/>
</dbReference>
<dbReference type="CCDS" id="CCDS13112.1">
    <molecule id="P78504-1"/>
</dbReference>
<dbReference type="RefSeq" id="NP_000205.1">
    <molecule id="P78504-1"/>
    <property type="nucleotide sequence ID" value="NM_000214.3"/>
</dbReference>
<dbReference type="RefSeq" id="XP_016883196.1">
    <property type="nucleotide sequence ID" value="XM_017027707.1"/>
</dbReference>
<dbReference type="PDB" id="2KB9">
    <property type="method" value="NMR"/>
    <property type="chains" value="A=252-295"/>
</dbReference>
<dbReference type="PDB" id="2VJ2">
    <property type="method" value="X-ray"/>
    <property type="resolution" value="2.50 A"/>
    <property type="chains" value="A/B=185-335"/>
</dbReference>
<dbReference type="PDB" id="4CBZ">
    <property type="method" value="X-ray"/>
    <property type="resolution" value="2.50 A"/>
    <property type="chains" value="A/B=32-335"/>
</dbReference>
<dbReference type="PDB" id="4CC0">
    <property type="method" value="X-ray"/>
    <property type="resolution" value="2.32 A"/>
    <property type="chains" value="A/B=32-335"/>
</dbReference>
<dbReference type="PDB" id="4CC1">
    <property type="method" value="X-ray"/>
    <property type="resolution" value="2.84 A"/>
    <property type="chains" value="A/B=32-335"/>
</dbReference>
<dbReference type="PDB" id="4XI7">
    <property type="method" value="X-ray"/>
    <property type="resolution" value="2.05 A"/>
    <property type="chains" value="C=1120-1130"/>
</dbReference>
<dbReference type="PDB" id="5BO1">
    <property type="method" value="X-ray"/>
    <property type="resolution" value="2.56 A"/>
    <property type="chains" value="A/B=186-335"/>
</dbReference>
<dbReference type="PDBsum" id="2KB9"/>
<dbReference type="PDBsum" id="2VJ2"/>
<dbReference type="PDBsum" id="4CBZ"/>
<dbReference type="PDBsum" id="4CC0"/>
<dbReference type="PDBsum" id="4CC1"/>
<dbReference type="PDBsum" id="4XI7"/>
<dbReference type="PDBsum" id="5BO1"/>
<dbReference type="BMRB" id="P78504"/>
<dbReference type="SMR" id="P78504"/>
<dbReference type="BioGRID" id="106689">
    <property type="interactions" value="44"/>
</dbReference>
<dbReference type="DIP" id="DIP-46371N"/>
<dbReference type="FunCoup" id="P78504">
    <property type="interactions" value="590"/>
</dbReference>
<dbReference type="IntAct" id="P78504">
    <property type="interactions" value="21"/>
</dbReference>
<dbReference type="MINT" id="P78504"/>
<dbReference type="STRING" id="9606.ENSP00000254958"/>
<dbReference type="ChEMBL" id="CHEMBL3217396"/>
<dbReference type="GlyCosmos" id="P78504">
    <property type="glycosylation" value="9 sites, No reported glycans"/>
</dbReference>
<dbReference type="GlyGen" id="P78504">
    <property type="glycosylation" value="11 sites, 4 N-linked glycans (2 sites), 1 O-linked glycan (1 site)"/>
</dbReference>
<dbReference type="iPTMnet" id="P78504"/>
<dbReference type="PhosphoSitePlus" id="P78504"/>
<dbReference type="SwissPalm" id="P78504"/>
<dbReference type="BioMuta" id="JAG1"/>
<dbReference type="DMDM" id="20455033"/>
<dbReference type="jPOST" id="P78504"/>
<dbReference type="MassIVE" id="P78504"/>
<dbReference type="PaxDb" id="9606-ENSP00000254958"/>
<dbReference type="PeptideAtlas" id="P78504"/>
<dbReference type="ProteomicsDB" id="5543"/>
<dbReference type="ProteomicsDB" id="57626">
    <molecule id="P78504-1"/>
</dbReference>
<dbReference type="Pumba" id="P78504"/>
<dbReference type="ABCD" id="P78504">
    <property type="antibodies" value="12 sequenced antibodies"/>
</dbReference>
<dbReference type="Antibodypedia" id="4153">
    <property type="antibodies" value="952 antibodies from 42 providers"/>
</dbReference>
<dbReference type="DNASU" id="182"/>
<dbReference type="Ensembl" id="ENST00000254958.10">
    <molecule id="P78504-1"/>
    <property type="protein sequence ID" value="ENSP00000254958.4"/>
    <property type="gene ID" value="ENSG00000101384.12"/>
</dbReference>
<dbReference type="GeneID" id="182"/>
<dbReference type="KEGG" id="hsa:182"/>
<dbReference type="MANE-Select" id="ENST00000254958.10">
    <property type="protein sequence ID" value="ENSP00000254958.4"/>
    <property type="RefSeq nucleotide sequence ID" value="NM_000214.3"/>
    <property type="RefSeq protein sequence ID" value="NP_000205.1"/>
</dbReference>
<dbReference type="UCSC" id="uc002wnw.3">
    <molecule id="P78504-1"/>
    <property type="organism name" value="human"/>
</dbReference>
<dbReference type="AGR" id="HGNC:6188"/>
<dbReference type="CTD" id="182"/>
<dbReference type="DisGeNET" id="182"/>
<dbReference type="GeneCards" id="JAG1"/>
<dbReference type="GeneReviews" id="JAG1"/>
<dbReference type="HGNC" id="HGNC:6188">
    <property type="gene designation" value="JAG1"/>
</dbReference>
<dbReference type="HPA" id="ENSG00000101384">
    <property type="expression patterns" value="Low tissue specificity"/>
</dbReference>
<dbReference type="MalaCards" id="JAG1"/>
<dbReference type="MIM" id="118450">
    <property type="type" value="phenotype"/>
</dbReference>
<dbReference type="MIM" id="187500">
    <property type="type" value="phenotype"/>
</dbReference>
<dbReference type="MIM" id="601920">
    <property type="type" value="gene"/>
</dbReference>
<dbReference type="MIM" id="617992">
    <property type="type" value="phenotype"/>
</dbReference>
<dbReference type="MIM" id="619574">
    <property type="type" value="phenotype"/>
</dbReference>
<dbReference type="neXtProt" id="NX_P78504"/>
<dbReference type="OpenTargets" id="ENSG00000101384"/>
<dbReference type="Orphanet" id="261600">
    <property type="disease" value="Alagille syndrome due to 20p12 microdeletion"/>
</dbReference>
<dbReference type="Orphanet" id="261619">
    <property type="disease" value="Alagille syndrome due to a JAG1 point mutation"/>
</dbReference>
<dbReference type="Orphanet" id="3303">
    <property type="disease" value="Tetralogy of Fallot"/>
</dbReference>
<dbReference type="PharmGKB" id="PA29986"/>
<dbReference type="VEuPathDB" id="HostDB:ENSG00000101384"/>
<dbReference type="eggNOG" id="KOG1217">
    <property type="taxonomic scope" value="Eukaryota"/>
</dbReference>
<dbReference type="GeneTree" id="ENSGT00940000160148"/>
<dbReference type="HOGENOM" id="CLU_004732_0_0_1"/>
<dbReference type="InParanoid" id="P78504"/>
<dbReference type="OMA" id="CHPVHGH"/>
<dbReference type="OrthoDB" id="283575at2759"/>
<dbReference type="PAN-GO" id="P78504">
    <property type="GO annotations" value="1 GO annotation based on evolutionary models"/>
</dbReference>
<dbReference type="PhylomeDB" id="P78504"/>
<dbReference type="TreeFam" id="TF351835"/>
<dbReference type="PathwayCommons" id="P78504"/>
<dbReference type="Reactome" id="R-HSA-2122948">
    <property type="pathway name" value="Activated NOTCH1 Transmits Signal to the Nucleus"/>
</dbReference>
<dbReference type="Reactome" id="R-HSA-2644606">
    <property type="pathway name" value="Constitutive Signaling by NOTCH1 PEST Domain Mutants"/>
</dbReference>
<dbReference type="Reactome" id="R-HSA-2660826">
    <property type="pathway name" value="Constitutive Signaling by NOTCH1 t(7;9)(NOTCH1:M1580_K2555) Translocation Mutant"/>
</dbReference>
<dbReference type="Reactome" id="R-HSA-2691232">
    <property type="pathway name" value="Constitutive Signaling by NOTCH1 HD Domain Mutants"/>
</dbReference>
<dbReference type="Reactome" id="R-HSA-2894862">
    <property type="pathway name" value="Constitutive Signaling by NOTCH1 HD+PEST Domain Mutants"/>
</dbReference>
<dbReference type="Reactome" id="R-HSA-2979096">
    <property type="pathway name" value="NOTCH2 Activation and Transmission of Signal to the Nucleus"/>
</dbReference>
<dbReference type="Reactome" id="R-HSA-8941856">
    <property type="pathway name" value="RUNX3 regulates NOTCH signaling"/>
</dbReference>
<dbReference type="Reactome" id="R-HSA-9013149">
    <property type="pathway name" value="RAC1 GTPase cycle"/>
</dbReference>
<dbReference type="Reactome" id="R-HSA-9013423">
    <property type="pathway name" value="RAC3 GTPase cycle"/>
</dbReference>
<dbReference type="Reactome" id="R-HSA-9013507">
    <property type="pathway name" value="NOTCH3 Activation and Transmission of Signal to the Nucleus"/>
</dbReference>
<dbReference type="Reactome" id="R-HSA-9013700">
    <property type="pathway name" value="NOTCH4 Activation and Transmission of Signal to the Nucleus"/>
</dbReference>
<dbReference type="Reactome" id="R-HSA-9831926">
    <property type="pathway name" value="Nephron development"/>
</dbReference>
<dbReference type="SignaLink" id="P78504"/>
<dbReference type="SIGNOR" id="P78504"/>
<dbReference type="BioGRID-ORCS" id="182">
    <property type="hits" value="26 hits in 1088 CRISPR screens"/>
</dbReference>
<dbReference type="ChiTaRS" id="JAG1">
    <property type="organism name" value="human"/>
</dbReference>
<dbReference type="EvolutionaryTrace" id="P78504"/>
<dbReference type="GeneWiki" id="JAG1"/>
<dbReference type="GenomeRNAi" id="182"/>
<dbReference type="Pharos" id="P78504">
    <property type="development level" value="Tbio"/>
</dbReference>
<dbReference type="PRO" id="PR:P78504"/>
<dbReference type="Proteomes" id="UP000005640">
    <property type="component" value="Chromosome 20"/>
</dbReference>
<dbReference type="RNAct" id="P78504">
    <property type="molecule type" value="protein"/>
</dbReference>
<dbReference type="Bgee" id="ENSG00000101384">
    <property type="expression patterns" value="Expressed in upper leg skin and 208 other cell types or tissues"/>
</dbReference>
<dbReference type="ExpressionAtlas" id="P78504">
    <property type="expression patterns" value="baseline and differential"/>
</dbReference>
<dbReference type="GO" id="GO:0005912">
    <property type="term" value="C:adherens junction"/>
    <property type="evidence" value="ECO:0000250"/>
    <property type="project" value="UniProtKB"/>
</dbReference>
<dbReference type="GO" id="GO:0016324">
    <property type="term" value="C:apical plasma membrane"/>
    <property type="evidence" value="ECO:0000250"/>
    <property type="project" value="UniProtKB"/>
</dbReference>
<dbReference type="GO" id="GO:0005576">
    <property type="term" value="C:extracellular region"/>
    <property type="evidence" value="ECO:0000303"/>
    <property type="project" value="UniProtKB"/>
</dbReference>
<dbReference type="GO" id="GO:0016020">
    <property type="term" value="C:membrane"/>
    <property type="evidence" value="ECO:0000304"/>
    <property type="project" value="UniProtKB"/>
</dbReference>
<dbReference type="GO" id="GO:0005886">
    <property type="term" value="C:plasma membrane"/>
    <property type="evidence" value="ECO:0000314"/>
    <property type="project" value="UniProtKB"/>
</dbReference>
<dbReference type="GO" id="GO:0005509">
    <property type="term" value="F:calcium ion binding"/>
    <property type="evidence" value="ECO:0007669"/>
    <property type="project" value="InterPro"/>
</dbReference>
<dbReference type="GO" id="GO:0008083">
    <property type="term" value="F:growth factor activity"/>
    <property type="evidence" value="ECO:0000303"/>
    <property type="project" value="UniProtKB"/>
</dbReference>
<dbReference type="GO" id="GO:0060090">
    <property type="term" value="F:molecular adaptor activity"/>
    <property type="evidence" value="ECO:0000314"/>
    <property type="project" value="DisProt"/>
</dbReference>
<dbReference type="GO" id="GO:0005112">
    <property type="term" value="F:Notch binding"/>
    <property type="evidence" value="ECO:0000353"/>
    <property type="project" value="UniProtKB"/>
</dbReference>
<dbReference type="GO" id="GO:0005543">
    <property type="term" value="F:phospholipid binding"/>
    <property type="evidence" value="ECO:0000315"/>
    <property type="project" value="CAFA"/>
</dbReference>
<dbReference type="GO" id="GO:0005198">
    <property type="term" value="F:structural molecule activity"/>
    <property type="evidence" value="ECO:0000303"/>
    <property type="project" value="UniProtKB"/>
</dbReference>
<dbReference type="GO" id="GO:0001525">
    <property type="term" value="P:angiogenesis"/>
    <property type="evidence" value="ECO:0000303"/>
    <property type="project" value="UniProtKB"/>
</dbReference>
<dbReference type="GO" id="GO:0035909">
    <property type="term" value="P:aorta morphogenesis"/>
    <property type="evidence" value="ECO:0000250"/>
    <property type="project" value="BHF-UCL"/>
</dbReference>
<dbReference type="GO" id="GO:0003180">
    <property type="term" value="P:aortic valve morphogenesis"/>
    <property type="evidence" value="ECO:0000303"/>
    <property type="project" value="BHF-UCL"/>
</dbReference>
<dbReference type="GO" id="GO:0001974">
    <property type="term" value="P:blood vessel remodeling"/>
    <property type="evidence" value="ECO:0007669"/>
    <property type="project" value="Ensembl"/>
</dbReference>
<dbReference type="GO" id="GO:0061309">
    <property type="term" value="P:cardiac neural crest cell development involved in outflow tract morphogenesis"/>
    <property type="evidence" value="ECO:0000250"/>
    <property type="project" value="BHF-UCL"/>
</dbReference>
<dbReference type="GO" id="GO:0003215">
    <property type="term" value="P:cardiac right ventricle morphogenesis"/>
    <property type="evidence" value="ECO:0000250"/>
    <property type="project" value="BHF-UCL"/>
</dbReference>
<dbReference type="GO" id="GO:0060411">
    <property type="term" value="P:cardiac septum morphogenesis"/>
    <property type="evidence" value="ECO:0000250"/>
    <property type="project" value="BHF-UCL"/>
</dbReference>
<dbReference type="GO" id="GO:0001709">
    <property type="term" value="P:cell fate determination"/>
    <property type="evidence" value="ECO:0000303"/>
    <property type="project" value="UniProtKB"/>
</dbReference>
<dbReference type="GO" id="GO:0061073">
    <property type="term" value="P:ciliary body morphogenesis"/>
    <property type="evidence" value="ECO:0007669"/>
    <property type="project" value="Ensembl"/>
</dbReference>
<dbReference type="GO" id="GO:0072017">
    <property type="term" value="P:distal tubule development"/>
    <property type="evidence" value="ECO:0007669"/>
    <property type="project" value="Ensembl"/>
</dbReference>
<dbReference type="GO" id="GO:0061444">
    <property type="term" value="P:endocardial cushion cell development"/>
    <property type="evidence" value="ECO:0000250"/>
    <property type="project" value="BHF-UCL"/>
</dbReference>
<dbReference type="GO" id="GO:0045446">
    <property type="term" value="P:endothelial cell differentiation"/>
    <property type="evidence" value="ECO:0000303"/>
    <property type="project" value="UniProtKB"/>
</dbReference>
<dbReference type="GO" id="GO:0030097">
    <property type="term" value="P:hemopoiesis"/>
    <property type="evidence" value="ECO:0000303"/>
    <property type="project" value="UniProtKB"/>
</dbReference>
<dbReference type="GO" id="GO:0002085">
    <property type="term" value="P:inhibition of neuroepithelial cell differentiation"/>
    <property type="evidence" value="ECO:0007669"/>
    <property type="project" value="Ensembl"/>
</dbReference>
<dbReference type="GO" id="GO:0042491">
    <property type="term" value="P:inner ear auditory receptor cell differentiation"/>
    <property type="evidence" value="ECO:0007669"/>
    <property type="project" value="Ensembl"/>
</dbReference>
<dbReference type="GO" id="GO:0030216">
    <property type="term" value="P:keratinocyte differentiation"/>
    <property type="evidence" value="ECO:0000303"/>
    <property type="project" value="UniProtKB"/>
</dbReference>
<dbReference type="GO" id="GO:0072070">
    <property type="term" value="P:loop of Henle development"/>
    <property type="evidence" value="ECO:0007669"/>
    <property type="project" value="Ensembl"/>
</dbReference>
<dbReference type="GO" id="GO:0002011">
    <property type="term" value="P:morphogenesis of an epithelial sheet"/>
    <property type="evidence" value="ECO:0007669"/>
    <property type="project" value="Ensembl"/>
</dbReference>
<dbReference type="GO" id="GO:0045445">
    <property type="term" value="P:myoblast differentiation"/>
    <property type="evidence" value="ECO:0000303"/>
    <property type="project" value="UniProtKB"/>
</dbReference>
<dbReference type="GO" id="GO:0030336">
    <property type="term" value="P:negative regulation of cell migration"/>
    <property type="evidence" value="ECO:0000314"/>
    <property type="project" value="UniProtKB"/>
</dbReference>
<dbReference type="GO" id="GO:0022408">
    <property type="term" value="P:negative regulation of cell-cell adhesion"/>
    <property type="evidence" value="ECO:0000314"/>
    <property type="project" value="UniProtKB"/>
</dbReference>
<dbReference type="GO" id="GO:0001953">
    <property type="term" value="P:negative regulation of cell-matrix adhesion"/>
    <property type="evidence" value="ECO:0000314"/>
    <property type="project" value="UniProtKB"/>
</dbReference>
<dbReference type="GO" id="GO:0045602">
    <property type="term" value="P:negative regulation of endothelial cell differentiation"/>
    <property type="evidence" value="ECO:0007669"/>
    <property type="project" value="Ensembl"/>
</dbReference>
<dbReference type="GO" id="GO:0045599">
    <property type="term" value="P:negative regulation of fat cell differentiation"/>
    <property type="evidence" value="ECO:0007669"/>
    <property type="project" value="Ensembl"/>
</dbReference>
<dbReference type="GO" id="GO:0045665">
    <property type="term" value="P:negative regulation of neuron differentiation"/>
    <property type="evidence" value="ECO:0007669"/>
    <property type="project" value="Ensembl"/>
</dbReference>
<dbReference type="GO" id="GO:2000737">
    <property type="term" value="P:negative regulation of stem cell differentiation"/>
    <property type="evidence" value="ECO:0000315"/>
    <property type="project" value="UniProtKB"/>
</dbReference>
<dbReference type="GO" id="GO:0072006">
    <property type="term" value="P:nephron development"/>
    <property type="evidence" value="ECO:0000250"/>
    <property type="project" value="UniProtKB"/>
</dbReference>
<dbReference type="GO" id="GO:0007399">
    <property type="term" value="P:nervous system development"/>
    <property type="evidence" value="ECO:0000303"/>
    <property type="project" value="UniProtKB"/>
</dbReference>
<dbReference type="GO" id="GO:0061101">
    <property type="term" value="P:neuroendocrine cell differentiation"/>
    <property type="evidence" value="ECO:0007669"/>
    <property type="project" value="Ensembl"/>
</dbReference>
<dbReference type="GO" id="GO:0097150">
    <property type="term" value="P:neuronal stem cell population maintenance"/>
    <property type="evidence" value="ECO:0000270"/>
    <property type="project" value="UniProtKB"/>
</dbReference>
<dbReference type="GO" id="GO:0007219">
    <property type="term" value="P:Notch signaling pathway"/>
    <property type="evidence" value="ECO:0000315"/>
    <property type="project" value="UniProtKB"/>
</dbReference>
<dbReference type="GO" id="GO:0072015">
    <property type="term" value="P:podocyte development"/>
    <property type="evidence" value="ECO:0000250"/>
    <property type="project" value="UniProtKB"/>
</dbReference>
<dbReference type="GO" id="GO:0062043">
    <property type="term" value="P:positive regulation of cardiac epithelial to mesenchymal transition"/>
    <property type="evidence" value="ECO:0000250"/>
    <property type="project" value="BHF-UCL"/>
</dbReference>
<dbReference type="GO" id="GO:0045639">
    <property type="term" value="P:positive regulation of myeloid cell differentiation"/>
    <property type="evidence" value="ECO:0007669"/>
    <property type="project" value="Ensembl"/>
</dbReference>
<dbReference type="GO" id="GO:0045747">
    <property type="term" value="P:positive regulation of Notch signaling pathway"/>
    <property type="evidence" value="ECO:0000250"/>
    <property type="project" value="UniProtKB"/>
</dbReference>
<dbReference type="GO" id="GO:0045669">
    <property type="term" value="P:positive regulation of osteoblast differentiation"/>
    <property type="evidence" value="ECO:0007669"/>
    <property type="project" value="Ensembl"/>
</dbReference>
<dbReference type="GO" id="GO:0045944">
    <property type="term" value="P:positive regulation of transcription by RNA polymerase II"/>
    <property type="evidence" value="ECO:0000315"/>
    <property type="project" value="BHF-UCL"/>
</dbReference>
<dbReference type="GO" id="GO:0061156">
    <property type="term" value="P:pulmonary artery morphogenesis"/>
    <property type="evidence" value="ECO:0000315"/>
    <property type="project" value="BHF-UCL"/>
</dbReference>
<dbReference type="GO" id="GO:0003184">
    <property type="term" value="P:pulmonary valve morphogenesis"/>
    <property type="evidence" value="ECO:0000315"/>
    <property type="project" value="BHF-UCL"/>
</dbReference>
<dbReference type="GO" id="GO:0042127">
    <property type="term" value="P:regulation of cell population proliferation"/>
    <property type="evidence" value="ECO:0000303"/>
    <property type="project" value="UniProtKB"/>
</dbReference>
<dbReference type="GO" id="GO:0050678">
    <property type="term" value="P:regulation of epithelial cell proliferation"/>
    <property type="evidence" value="ECO:0007669"/>
    <property type="project" value="Ensembl"/>
</dbReference>
<dbReference type="GO" id="GO:0032495">
    <property type="term" value="P:response to muramyl dipeptide"/>
    <property type="evidence" value="ECO:0007669"/>
    <property type="project" value="Ensembl"/>
</dbReference>
<dbReference type="GO" id="GO:0002456">
    <property type="term" value="P:T cell mediated immunity"/>
    <property type="evidence" value="ECO:0000315"/>
    <property type="project" value="UniProtKB"/>
</dbReference>
<dbReference type="CDD" id="cd00054">
    <property type="entry name" value="EGF_CA"/>
    <property type="match status" value="13"/>
</dbReference>
<dbReference type="DisProt" id="DP00418"/>
<dbReference type="FunFam" id="2.10.25.10:FF:000018">
    <property type="entry name" value="Delta-like 1"/>
    <property type="match status" value="1"/>
</dbReference>
<dbReference type="FunFam" id="2.10.25.10:FF:000007">
    <property type="entry name" value="Delta-like protein"/>
    <property type="match status" value="3"/>
</dbReference>
<dbReference type="FunFam" id="2.10.25.10:FF:000061">
    <property type="entry name" value="Delta-like protein"/>
    <property type="match status" value="1"/>
</dbReference>
<dbReference type="FunFam" id="2.10.25.10:FF:000117">
    <property type="entry name" value="Delta-like protein"/>
    <property type="match status" value="1"/>
</dbReference>
<dbReference type="FunFam" id="2.10.25.10:FF:000148">
    <property type="entry name" value="Delta-like protein"/>
    <property type="match status" value="2"/>
</dbReference>
<dbReference type="FunFam" id="2.10.25.10:FF:000181">
    <property type="entry name" value="Delta-like protein"/>
    <property type="match status" value="1"/>
</dbReference>
<dbReference type="FunFam" id="2.10.25.10:FF:000229">
    <property type="entry name" value="Delta-like protein"/>
    <property type="match status" value="1"/>
</dbReference>
<dbReference type="FunFam" id="2.10.25.10:FF:000473">
    <property type="entry name" value="Delta-like protein"/>
    <property type="match status" value="1"/>
</dbReference>
<dbReference type="FunFam" id="2.10.25.140:FF:000001">
    <property type="entry name" value="Delta-like protein"/>
    <property type="match status" value="1"/>
</dbReference>
<dbReference type="FunFam" id="2.60.40.3510:FF:000001">
    <property type="entry name" value="Delta-like protein"/>
    <property type="match status" value="1"/>
</dbReference>
<dbReference type="FunFam" id="2.10.25.10:FF:000143">
    <property type="entry name" value="Protein crumbs 1"/>
    <property type="match status" value="2"/>
</dbReference>
<dbReference type="FunFam" id="2.10.25.10:FF:000146">
    <property type="entry name" value="Putative neurogenic locus notch"/>
    <property type="match status" value="1"/>
</dbReference>
<dbReference type="Gene3D" id="2.10.25.140">
    <property type="match status" value="1"/>
</dbReference>
<dbReference type="Gene3D" id="2.60.40.3510">
    <property type="match status" value="1"/>
</dbReference>
<dbReference type="Gene3D" id="2.10.25.10">
    <property type="entry name" value="Laminin"/>
    <property type="match status" value="15"/>
</dbReference>
<dbReference type="IDEAL" id="IID00203"/>
<dbReference type="InterPro" id="IPR001774">
    <property type="entry name" value="DSL"/>
</dbReference>
<dbReference type="InterPro" id="IPR001881">
    <property type="entry name" value="EGF-like_Ca-bd_dom"/>
</dbReference>
<dbReference type="InterPro" id="IPR013032">
    <property type="entry name" value="EGF-like_CS"/>
</dbReference>
<dbReference type="InterPro" id="IPR000742">
    <property type="entry name" value="EGF-like_dom"/>
</dbReference>
<dbReference type="InterPro" id="IPR000152">
    <property type="entry name" value="EGF-type_Asp/Asn_hydroxyl_site"/>
</dbReference>
<dbReference type="InterPro" id="IPR018097">
    <property type="entry name" value="EGF_Ca-bd_CS"/>
</dbReference>
<dbReference type="InterPro" id="IPR009030">
    <property type="entry name" value="Growth_fac_rcpt_cys_sf"/>
</dbReference>
<dbReference type="InterPro" id="IPR056986">
    <property type="entry name" value="JAG1_1/2_dom"/>
</dbReference>
<dbReference type="InterPro" id="IPR026219">
    <property type="entry name" value="Jagged/Serrate"/>
</dbReference>
<dbReference type="InterPro" id="IPR011651">
    <property type="entry name" value="Notch_ligand_N"/>
</dbReference>
<dbReference type="InterPro" id="IPR001007">
    <property type="entry name" value="VWF_dom"/>
</dbReference>
<dbReference type="PANTHER" id="PTHR12916">
    <property type="entry name" value="CYTOCHROME C OXIDASE POLYPEPTIDE VIC-2"/>
    <property type="match status" value="1"/>
</dbReference>
<dbReference type="PANTHER" id="PTHR12916:SF12">
    <property type="entry name" value="DELTA-LIKE PROTEIN"/>
    <property type="match status" value="1"/>
</dbReference>
<dbReference type="Pfam" id="PF01414">
    <property type="entry name" value="DSL"/>
    <property type="match status" value="1"/>
</dbReference>
<dbReference type="Pfam" id="PF00008">
    <property type="entry name" value="EGF"/>
    <property type="match status" value="5"/>
</dbReference>
<dbReference type="Pfam" id="PF21700">
    <property type="entry name" value="EGF_DL_JAG"/>
    <property type="match status" value="1"/>
</dbReference>
<dbReference type="Pfam" id="PF25024">
    <property type="entry name" value="EGF_TEN"/>
    <property type="match status" value="1"/>
</dbReference>
<dbReference type="Pfam" id="PF12661">
    <property type="entry name" value="hEGF"/>
    <property type="match status" value="2"/>
</dbReference>
<dbReference type="Pfam" id="PF23575">
    <property type="entry name" value="JAG1"/>
    <property type="match status" value="1"/>
</dbReference>
<dbReference type="Pfam" id="PF07657">
    <property type="entry name" value="MNNL"/>
    <property type="match status" value="1"/>
</dbReference>
<dbReference type="PRINTS" id="PR00010">
    <property type="entry name" value="EGFBLOOD"/>
</dbReference>
<dbReference type="PRINTS" id="PR02059">
    <property type="entry name" value="JAGGEDFAMILY"/>
</dbReference>
<dbReference type="SMART" id="SM00051">
    <property type="entry name" value="DSL"/>
    <property type="match status" value="1"/>
</dbReference>
<dbReference type="SMART" id="SM00181">
    <property type="entry name" value="EGF"/>
    <property type="match status" value="16"/>
</dbReference>
<dbReference type="SMART" id="SM00179">
    <property type="entry name" value="EGF_CA"/>
    <property type="match status" value="14"/>
</dbReference>
<dbReference type="SMART" id="SM00214">
    <property type="entry name" value="VWC"/>
    <property type="match status" value="1"/>
</dbReference>
<dbReference type="SMART" id="SM00215">
    <property type="entry name" value="VWC_out"/>
    <property type="match status" value="1"/>
</dbReference>
<dbReference type="SUPFAM" id="SSF57196">
    <property type="entry name" value="EGF/Laminin"/>
    <property type="match status" value="4"/>
</dbReference>
<dbReference type="SUPFAM" id="SSF57603">
    <property type="entry name" value="FnI-like domain"/>
    <property type="match status" value="1"/>
</dbReference>
<dbReference type="SUPFAM" id="SSF57184">
    <property type="entry name" value="Growth factor receptor domain"/>
    <property type="match status" value="3"/>
</dbReference>
<dbReference type="PROSITE" id="PS00010">
    <property type="entry name" value="ASX_HYDROXYL"/>
    <property type="match status" value="10"/>
</dbReference>
<dbReference type="PROSITE" id="PS51051">
    <property type="entry name" value="DSL"/>
    <property type="match status" value="1"/>
</dbReference>
<dbReference type="PROSITE" id="PS00022">
    <property type="entry name" value="EGF_1"/>
    <property type="match status" value="16"/>
</dbReference>
<dbReference type="PROSITE" id="PS01186">
    <property type="entry name" value="EGF_2"/>
    <property type="match status" value="12"/>
</dbReference>
<dbReference type="PROSITE" id="PS50026">
    <property type="entry name" value="EGF_3"/>
    <property type="match status" value="15"/>
</dbReference>
<dbReference type="PROSITE" id="PS01187">
    <property type="entry name" value="EGF_CA"/>
    <property type="match status" value="8"/>
</dbReference>
<gene>
    <name type="primary">JAG1</name>
    <name type="synonym">JAGL1</name>
</gene>
<organism>
    <name type="scientific">Homo sapiens</name>
    <name type="common">Human</name>
    <dbReference type="NCBI Taxonomy" id="9606"/>
    <lineage>
        <taxon>Eukaryota</taxon>
        <taxon>Metazoa</taxon>
        <taxon>Chordata</taxon>
        <taxon>Craniata</taxon>
        <taxon>Vertebrata</taxon>
        <taxon>Euteleostomi</taxon>
        <taxon>Mammalia</taxon>
        <taxon>Eutheria</taxon>
        <taxon>Euarchontoglires</taxon>
        <taxon>Primates</taxon>
        <taxon>Haplorrhini</taxon>
        <taxon>Catarrhini</taxon>
        <taxon>Hominidae</taxon>
        <taxon>Homo</taxon>
    </lineage>
</organism>
<accession>P78504</accession>
<accession>A0AV43</accession>
<accession>B4DYR1</accession>
<accession>E9PCF9</accession>
<accession>O14902</accession>
<accession>O15122</accession>
<accession>Q15816</accession>
<protein>
    <recommendedName>
        <fullName>Protein jagged-1</fullName>
        <shortName>Jagged1</shortName>
        <shortName>hJ1</shortName>
    </recommendedName>
    <cdAntigenName>CD339</cdAntigenName>
</protein>